<keyword id="KW-0002">3D-structure</keyword>
<keyword id="KW-0025">Alternative splicing</keyword>
<keyword id="KW-0106">Calcium</keyword>
<keyword id="KW-0107">Calcium channel</keyword>
<keyword id="KW-0109">Calcium transport</keyword>
<keyword id="KW-1003">Cell membrane</keyword>
<keyword id="KW-0966">Cell projection</keyword>
<keyword id="KW-0968">Cytoplasmic vesicle</keyword>
<keyword id="KW-1015">Disulfide bond</keyword>
<keyword id="KW-0407">Ion channel</keyword>
<keyword id="KW-0406">Ion transport</keyword>
<keyword id="KW-0458">Lysosome</keyword>
<keyword id="KW-0472">Membrane</keyword>
<keyword id="KW-0479">Metal-binding</keyword>
<keyword id="KW-0597">Phosphoprotein</keyword>
<keyword id="KW-1267">Proteomics identification</keyword>
<keyword id="KW-1185">Reference proteome</keyword>
<keyword id="KW-0915">Sodium</keyword>
<keyword id="KW-0894">Sodium channel</keyword>
<keyword id="KW-0739">Sodium transport</keyword>
<keyword id="KW-0812">Transmembrane</keyword>
<keyword id="KW-1133">Transmembrane helix</keyword>
<keyword id="KW-0813">Transport</keyword>
<dbReference type="EMBL" id="AB001535">
    <property type="protein sequence ID" value="BAA34700.1"/>
    <property type="molecule type" value="mRNA"/>
</dbReference>
<dbReference type="EMBL" id="AJ417076">
    <property type="protein sequence ID" value="CAD01139.1"/>
    <property type="molecule type" value="mRNA"/>
</dbReference>
<dbReference type="EMBL" id="AY603182">
    <property type="protein sequence ID" value="AAT12288.1"/>
    <property type="molecule type" value="mRNA"/>
</dbReference>
<dbReference type="EMBL" id="AB166745">
    <property type="protein sequence ID" value="BAD83705.1"/>
    <property type="molecule type" value="mRNA"/>
</dbReference>
<dbReference type="EMBL" id="AJ878416">
    <property type="protein sequence ID" value="CAI47593.1"/>
    <property type="molecule type" value="mRNA"/>
</dbReference>
<dbReference type="EMBL" id="DQ012935">
    <property type="protein sequence ID" value="AAY22174.1"/>
    <property type="molecule type" value="Genomic_DNA"/>
</dbReference>
<dbReference type="EMBL" id="AP001754">
    <property type="protein sequence ID" value="BAA95563.1"/>
    <property type="molecule type" value="Genomic_DNA"/>
</dbReference>
<dbReference type="EMBL" id="CH471079">
    <property type="protein sequence ID" value="EAX09426.1"/>
    <property type="molecule type" value="Genomic_DNA"/>
</dbReference>
<dbReference type="EMBL" id="CH471079">
    <property type="protein sequence ID" value="EAX09427.1"/>
    <property type="molecule type" value="Genomic_DNA"/>
</dbReference>
<dbReference type="EMBL" id="AB017549">
    <property type="protein sequence ID" value="BAB64300.1"/>
    <property type="status" value="ALT_FRAME"/>
    <property type="molecule type" value="mRNA"/>
</dbReference>
<dbReference type="CCDS" id="CCDS13710.1">
    <molecule id="O94759-1"/>
</dbReference>
<dbReference type="RefSeq" id="NP_001307279.1">
    <property type="nucleotide sequence ID" value="NM_001320350.1"/>
</dbReference>
<dbReference type="RefSeq" id="NP_001307280.1">
    <property type="nucleotide sequence ID" value="NM_001320351.1"/>
</dbReference>
<dbReference type="RefSeq" id="NP_001420445.1">
    <molecule id="O94759-1"/>
    <property type="nucleotide sequence ID" value="NM_001433516.1"/>
</dbReference>
<dbReference type="RefSeq" id="NP_003298.2">
    <molecule id="O94759-1"/>
    <property type="nucleotide sequence ID" value="NM_003307.4"/>
</dbReference>
<dbReference type="RefSeq" id="XP_005261228.1">
    <property type="nucleotide sequence ID" value="XM_005261171.3"/>
</dbReference>
<dbReference type="PDB" id="6MIX">
    <property type="method" value="EM"/>
    <property type="resolution" value="3.60 A"/>
    <property type="chains" value="A/B/C/D=1-1503"/>
</dbReference>
<dbReference type="PDB" id="6MIZ">
    <property type="method" value="EM"/>
    <property type="resolution" value="6.10 A"/>
    <property type="chains" value="A/B/C/D=1-1503"/>
</dbReference>
<dbReference type="PDB" id="6MJ2">
    <property type="method" value="EM"/>
    <property type="resolution" value="6.36 A"/>
    <property type="chains" value="A/B/C/D=1-1503"/>
</dbReference>
<dbReference type="PDB" id="6PUO">
    <property type="method" value="EM"/>
    <property type="resolution" value="3.30 A"/>
    <property type="chains" value="A/B/C/D=1-1503"/>
</dbReference>
<dbReference type="PDB" id="6PUR">
    <property type="method" value="EM"/>
    <property type="resolution" value="4.40 A"/>
    <property type="chains" value="A/B/C/D=1-1503"/>
</dbReference>
<dbReference type="PDB" id="6PUS">
    <property type="method" value="EM"/>
    <property type="resolution" value="3.70 A"/>
    <property type="chains" value="A/B/C/D=1-1503"/>
</dbReference>
<dbReference type="PDB" id="6PUU">
    <property type="method" value="EM"/>
    <property type="resolution" value="3.70 A"/>
    <property type="chains" value="A/B/C/D=1-1503"/>
</dbReference>
<dbReference type="PDB" id="7VQ1">
    <property type="method" value="EM"/>
    <property type="resolution" value="3.76 A"/>
    <property type="chains" value="A/B/C/D=1-1503"/>
</dbReference>
<dbReference type="PDB" id="7VQ2">
    <property type="method" value="EM"/>
    <property type="resolution" value="3.68 A"/>
    <property type="chains" value="A/B/C/D=745-1098"/>
</dbReference>
<dbReference type="PDB" id="8E6Q">
    <property type="method" value="EM"/>
    <property type="resolution" value="3.40 A"/>
    <property type="chains" value="A/B/C/D=1-1503"/>
</dbReference>
<dbReference type="PDB" id="8E6R">
    <property type="method" value="EM"/>
    <property type="resolution" value="5.60 A"/>
    <property type="chains" value="A/B/C/D=1-1503"/>
</dbReference>
<dbReference type="PDB" id="8E6S">
    <property type="method" value="EM"/>
    <property type="resolution" value="4.60 A"/>
    <property type="chains" value="A/B/C/D=1-1503"/>
</dbReference>
<dbReference type="PDB" id="8E6T">
    <property type="method" value="EM"/>
    <property type="resolution" value="3.70 A"/>
    <property type="chains" value="A/B/C/D=1-1503"/>
</dbReference>
<dbReference type="PDB" id="8E6U">
    <property type="method" value="EM"/>
    <property type="resolution" value="3.20 A"/>
    <property type="chains" value="A/B/C/D=1-1503"/>
</dbReference>
<dbReference type="PDB" id="8E6V">
    <property type="method" value="EM"/>
    <property type="resolution" value="3.30 A"/>
    <property type="chains" value="A=1-1503"/>
</dbReference>
<dbReference type="PDBsum" id="6MIX"/>
<dbReference type="PDBsum" id="6MIZ"/>
<dbReference type="PDBsum" id="6MJ2"/>
<dbReference type="PDBsum" id="6PUO"/>
<dbReference type="PDBsum" id="6PUR"/>
<dbReference type="PDBsum" id="6PUS"/>
<dbReference type="PDBsum" id="6PUU"/>
<dbReference type="PDBsum" id="7VQ1"/>
<dbReference type="PDBsum" id="7VQ2"/>
<dbReference type="PDBsum" id="8E6Q"/>
<dbReference type="PDBsum" id="8E6R"/>
<dbReference type="PDBsum" id="8E6S"/>
<dbReference type="PDBsum" id="8E6T"/>
<dbReference type="PDBsum" id="8E6U"/>
<dbReference type="PDBsum" id="8E6V"/>
<dbReference type="EMDB" id="EMD-20478"/>
<dbReference type="EMDB" id="EMD-20479"/>
<dbReference type="EMDB" id="EMD-20480"/>
<dbReference type="EMDB" id="EMD-20482"/>
<dbReference type="EMDB" id="EMD-27922"/>
<dbReference type="EMDB" id="EMD-27923"/>
<dbReference type="EMDB" id="EMD-27924"/>
<dbReference type="EMDB" id="EMD-27925"/>
<dbReference type="EMDB" id="EMD-27926"/>
<dbReference type="EMDB" id="EMD-27927"/>
<dbReference type="EMDB" id="EMD-32082"/>
<dbReference type="EMDB" id="EMD-32083"/>
<dbReference type="EMDB" id="EMD-9132"/>
<dbReference type="EMDB" id="EMD-9133"/>
<dbReference type="EMDB" id="EMD-9134"/>
<dbReference type="SMR" id="O94759"/>
<dbReference type="BioGRID" id="113077">
    <property type="interactions" value="8"/>
</dbReference>
<dbReference type="FunCoup" id="O94759">
    <property type="interactions" value="454"/>
</dbReference>
<dbReference type="IntAct" id="O94759">
    <property type="interactions" value="1"/>
</dbReference>
<dbReference type="STRING" id="9606.ENSP00000381026"/>
<dbReference type="BindingDB" id="O94759"/>
<dbReference type="ChEMBL" id="CHEMBL1250402"/>
<dbReference type="DrugCentral" id="O94759"/>
<dbReference type="GuidetoPHARMACOLOGY" id="494"/>
<dbReference type="TCDB" id="1.A.4.5.5">
    <property type="family name" value="the transient receptor potential ca2+/cation channel (trp-cc) family"/>
</dbReference>
<dbReference type="GlyGen" id="O94759">
    <property type="glycosylation" value="1 site, 1 N-linked glycan (1 site)"/>
</dbReference>
<dbReference type="iPTMnet" id="O94759"/>
<dbReference type="PhosphoSitePlus" id="O94759"/>
<dbReference type="BioMuta" id="TRPM2"/>
<dbReference type="jPOST" id="O94759"/>
<dbReference type="MassIVE" id="O94759"/>
<dbReference type="PaxDb" id="9606-ENSP00000381023"/>
<dbReference type="PeptideAtlas" id="O94759"/>
<dbReference type="ProteomicsDB" id="50419">
    <molecule id="O94759-1"/>
</dbReference>
<dbReference type="ProteomicsDB" id="50420">
    <molecule id="O94759-2"/>
</dbReference>
<dbReference type="ProteomicsDB" id="50421">
    <molecule id="O94759-3"/>
</dbReference>
<dbReference type="Antibodypedia" id="10236">
    <property type="antibodies" value="316 antibodies from 33 providers"/>
</dbReference>
<dbReference type="DNASU" id="7226"/>
<dbReference type="Ensembl" id="ENST00000300481.13">
    <molecule id="O94759-2"/>
    <property type="protein sequence ID" value="ENSP00000300481.9"/>
    <property type="gene ID" value="ENSG00000142185.18"/>
</dbReference>
<dbReference type="Ensembl" id="ENST00000300482.9">
    <molecule id="O94759-1"/>
    <property type="protein sequence ID" value="ENSP00000300482.5"/>
    <property type="gene ID" value="ENSG00000142185.18"/>
</dbReference>
<dbReference type="Ensembl" id="ENST00000397928.6">
    <molecule id="O94759-1"/>
    <property type="protein sequence ID" value="ENSP00000381023.1"/>
    <property type="gene ID" value="ENSG00000142185.18"/>
</dbReference>
<dbReference type="GeneID" id="7226"/>
<dbReference type="KEGG" id="hsa:7226"/>
<dbReference type="MANE-Select" id="ENST00000397928.6">
    <property type="protein sequence ID" value="ENSP00000381023.1"/>
    <property type="RefSeq nucleotide sequence ID" value="NM_003307.4"/>
    <property type="RefSeq protein sequence ID" value="NP_003298.2"/>
</dbReference>
<dbReference type="UCSC" id="uc002zet.1">
    <molecule id="O94759-1"/>
    <property type="organism name" value="human"/>
</dbReference>
<dbReference type="AGR" id="HGNC:12339"/>
<dbReference type="CTD" id="7226"/>
<dbReference type="DisGeNET" id="7226"/>
<dbReference type="GeneCards" id="TRPM2"/>
<dbReference type="HGNC" id="HGNC:12339">
    <property type="gene designation" value="TRPM2"/>
</dbReference>
<dbReference type="HPA" id="ENSG00000142185">
    <property type="expression patterns" value="Tissue enhanced (bone)"/>
</dbReference>
<dbReference type="MIM" id="603749">
    <property type="type" value="gene"/>
</dbReference>
<dbReference type="neXtProt" id="NX_O94759"/>
<dbReference type="OpenTargets" id="ENSG00000142185"/>
<dbReference type="PharmGKB" id="PA37012"/>
<dbReference type="VEuPathDB" id="HostDB:ENSG00000142185"/>
<dbReference type="eggNOG" id="KOG3614">
    <property type="taxonomic scope" value="Eukaryota"/>
</dbReference>
<dbReference type="eggNOG" id="KOG4195">
    <property type="taxonomic scope" value="Eukaryota"/>
</dbReference>
<dbReference type="GeneTree" id="ENSGT00940000156404"/>
<dbReference type="HOGENOM" id="CLU_001390_0_2_1"/>
<dbReference type="InParanoid" id="O94759"/>
<dbReference type="OMA" id="EFLIYEP"/>
<dbReference type="OrthoDB" id="310870at2759"/>
<dbReference type="PAN-GO" id="O94759">
    <property type="GO annotations" value="3 GO annotations based on evolutionary models"/>
</dbReference>
<dbReference type="PhylomeDB" id="O94759"/>
<dbReference type="TreeFam" id="TF314204"/>
<dbReference type="PathwayCommons" id="O94759"/>
<dbReference type="Reactome" id="R-HSA-3295583">
    <property type="pathway name" value="TRP channels"/>
</dbReference>
<dbReference type="Reactome" id="R-HSA-6798695">
    <property type="pathway name" value="Neutrophil degranulation"/>
</dbReference>
<dbReference type="SABIO-RK" id="O94759"/>
<dbReference type="SignaLink" id="O94759"/>
<dbReference type="BioGRID-ORCS" id="7226">
    <property type="hits" value="15 hits in 1141 CRISPR screens"/>
</dbReference>
<dbReference type="ChiTaRS" id="TRPM2">
    <property type="organism name" value="human"/>
</dbReference>
<dbReference type="GeneWiki" id="TRPM2"/>
<dbReference type="GenomeRNAi" id="7226"/>
<dbReference type="Pharos" id="O94759">
    <property type="development level" value="Tchem"/>
</dbReference>
<dbReference type="PRO" id="PR:O94759"/>
<dbReference type="Proteomes" id="UP000005640">
    <property type="component" value="Chromosome 21"/>
</dbReference>
<dbReference type="RNAct" id="O94759">
    <property type="molecule type" value="protein"/>
</dbReference>
<dbReference type="Bgee" id="ENSG00000142185">
    <property type="expression patterns" value="Expressed in right frontal lobe and 113 other cell types or tissues"/>
</dbReference>
<dbReference type="ExpressionAtlas" id="O94759">
    <property type="expression patterns" value="baseline and differential"/>
</dbReference>
<dbReference type="GO" id="GO:0042995">
    <property type="term" value="C:cell projection"/>
    <property type="evidence" value="ECO:0007669"/>
    <property type="project" value="UniProtKB-SubCell"/>
</dbReference>
<dbReference type="GO" id="GO:0030659">
    <property type="term" value="C:cytoplasmic vesicle membrane"/>
    <property type="evidence" value="ECO:0000250"/>
    <property type="project" value="UniProtKB"/>
</dbReference>
<dbReference type="GO" id="GO:0101003">
    <property type="term" value="C:ficolin-1-rich granule membrane"/>
    <property type="evidence" value="ECO:0000304"/>
    <property type="project" value="Reactome"/>
</dbReference>
<dbReference type="GO" id="GO:0005765">
    <property type="term" value="C:lysosomal membrane"/>
    <property type="evidence" value="ECO:0000250"/>
    <property type="project" value="UniProtKB"/>
</dbReference>
<dbReference type="GO" id="GO:0005764">
    <property type="term" value="C:lysosome"/>
    <property type="evidence" value="ECO:0000314"/>
    <property type="project" value="UniProtKB"/>
</dbReference>
<dbReference type="GO" id="GO:0043204">
    <property type="term" value="C:perikaryon"/>
    <property type="evidence" value="ECO:0007669"/>
    <property type="project" value="UniProtKB-SubCell"/>
</dbReference>
<dbReference type="GO" id="GO:0005886">
    <property type="term" value="C:plasma membrane"/>
    <property type="evidence" value="ECO:0000314"/>
    <property type="project" value="UniProtKB"/>
</dbReference>
<dbReference type="GO" id="GO:0035579">
    <property type="term" value="C:specific granule membrane"/>
    <property type="evidence" value="ECO:0000304"/>
    <property type="project" value="Reactome"/>
</dbReference>
<dbReference type="GO" id="GO:0070821">
    <property type="term" value="C:tertiary granule membrane"/>
    <property type="evidence" value="ECO:0000304"/>
    <property type="project" value="Reactome"/>
</dbReference>
<dbReference type="GO" id="GO:0005262">
    <property type="term" value="F:calcium channel activity"/>
    <property type="evidence" value="ECO:0000304"/>
    <property type="project" value="Reactome"/>
</dbReference>
<dbReference type="GO" id="GO:0005509">
    <property type="term" value="F:calcium ion binding"/>
    <property type="evidence" value="ECO:0000314"/>
    <property type="project" value="UniProtKB"/>
</dbReference>
<dbReference type="GO" id="GO:0015278">
    <property type="term" value="F:intracellularly gated calcium channel activity"/>
    <property type="evidence" value="ECO:0000315"/>
    <property type="project" value="UniProtKB"/>
</dbReference>
<dbReference type="GO" id="GO:0099604">
    <property type="term" value="F:ligand-gated calcium channel activity"/>
    <property type="evidence" value="ECO:0000314"/>
    <property type="project" value="UniProtKB"/>
</dbReference>
<dbReference type="GO" id="GO:0005384">
    <property type="term" value="F:manganese ion transmembrane transporter activity"/>
    <property type="evidence" value="ECO:0007669"/>
    <property type="project" value="Ensembl"/>
</dbReference>
<dbReference type="GO" id="GO:0072571">
    <property type="term" value="F:mono-ADP-D-ribose binding"/>
    <property type="evidence" value="ECO:0000314"/>
    <property type="project" value="UniProtKB"/>
</dbReference>
<dbReference type="GO" id="GO:0005261">
    <property type="term" value="F:monoatomic cation channel activity"/>
    <property type="evidence" value="ECO:0000315"/>
    <property type="project" value="UniProtKB"/>
</dbReference>
<dbReference type="GO" id="GO:0005272">
    <property type="term" value="F:sodium channel activity"/>
    <property type="evidence" value="ECO:0007669"/>
    <property type="project" value="UniProtKB-KW"/>
</dbReference>
<dbReference type="GO" id="GO:0098703">
    <property type="term" value="P:calcium ion import across plasma membrane"/>
    <property type="evidence" value="ECO:0000250"/>
    <property type="project" value="UniProtKB"/>
</dbReference>
<dbReference type="GO" id="GO:0097553">
    <property type="term" value="P:calcium ion transmembrane import into cytosol"/>
    <property type="evidence" value="ECO:0000315"/>
    <property type="project" value="UniProtKB"/>
</dbReference>
<dbReference type="GO" id="GO:0070588">
    <property type="term" value="P:calcium ion transmembrane transport"/>
    <property type="evidence" value="ECO:0000314"/>
    <property type="project" value="UniProtKB"/>
</dbReference>
<dbReference type="GO" id="GO:0006816">
    <property type="term" value="P:calcium ion transport"/>
    <property type="evidence" value="ECO:0000304"/>
    <property type="project" value="ProtInc"/>
</dbReference>
<dbReference type="GO" id="GO:0071277">
    <property type="term" value="P:cellular response to calcium ion"/>
    <property type="evidence" value="ECO:0000315"/>
    <property type="project" value="UniProtKB"/>
</dbReference>
<dbReference type="GO" id="GO:0070301">
    <property type="term" value="P:cellular response to hydrogen peroxide"/>
    <property type="evidence" value="ECO:0000314"/>
    <property type="project" value="UniProtKB"/>
</dbReference>
<dbReference type="GO" id="GO:0071502">
    <property type="term" value="P:cellular response to temperature stimulus"/>
    <property type="evidence" value="ECO:0000250"/>
    <property type="project" value="UniProtKB"/>
</dbReference>
<dbReference type="GO" id="GO:0002407">
    <property type="term" value="P:dendritic cell chemotaxis"/>
    <property type="evidence" value="ECO:0000250"/>
    <property type="project" value="UniProtKB"/>
</dbReference>
<dbReference type="GO" id="GO:0097028">
    <property type="term" value="P:dendritic cell differentiation"/>
    <property type="evidence" value="ECO:0000250"/>
    <property type="project" value="UniProtKB"/>
</dbReference>
<dbReference type="GO" id="GO:0051289">
    <property type="term" value="P:protein homotetramerization"/>
    <property type="evidence" value="ECO:0000314"/>
    <property type="project" value="UniProtKB"/>
</dbReference>
<dbReference type="GO" id="GO:0032956">
    <property type="term" value="P:regulation of actin cytoskeleton organization"/>
    <property type="evidence" value="ECO:0000315"/>
    <property type="project" value="UniProtKB"/>
</dbReference>
<dbReference type="GO" id="GO:0051489">
    <property type="term" value="P:regulation of filopodium assembly"/>
    <property type="evidence" value="ECO:0000315"/>
    <property type="project" value="UniProtKB"/>
</dbReference>
<dbReference type="GO" id="GO:0051209">
    <property type="term" value="P:release of sequestered calcium ion into cytosol"/>
    <property type="evidence" value="ECO:0000315"/>
    <property type="project" value="UniProtKB"/>
</dbReference>
<dbReference type="GO" id="GO:0009408">
    <property type="term" value="P:response to heat"/>
    <property type="evidence" value="ECO:0007669"/>
    <property type="project" value="Ensembl"/>
</dbReference>
<dbReference type="GO" id="GO:0033194">
    <property type="term" value="P:response to hydroperoxide"/>
    <property type="evidence" value="ECO:0007669"/>
    <property type="project" value="Ensembl"/>
</dbReference>
<dbReference type="GO" id="GO:0014074">
    <property type="term" value="P:response to purine-containing compound"/>
    <property type="evidence" value="ECO:0000315"/>
    <property type="project" value="UniProtKB"/>
</dbReference>
<dbReference type="GO" id="GO:0001659">
    <property type="term" value="P:temperature homeostasis"/>
    <property type="evidence" value="ECO:0000250"/>
    <property type="project" value="UniProtKB"/>
</dbReference>
<dbReference type="GO" id="GO:0071577">
    <property type="term" value="P:zinc ion transmembrane transport"/>
    <property type="evidence" value="ECO:0000315"/>
    <property type="project" value="UniProtKB"/>
</dbReference>
<dbReference type="CDD" id="cd03670">
    <property type="entry name" value="NUDIX_ADPRase_Nudt9"/>
    <property type="match status" value="1"/>
</dbReference>
<dbReference type="FunFam" id="3.90.79.10:FF:000047">
    <property type="entry name" value="Transient receptor potential cation channel subfamily M member 2"/>
    <property type="match status" value="1"/>
</dbReference>
<dbReference type="Gene3D" id="3.40.50.450">
    <property type="match status" value="1"/>
</dbReference>
<dbReference type="Gene3D" id="3.90.79.10">
    <property type="entry name" value="Nucleoside Triphosphate Pyrophosphohydrolase"/>
    <property type="match status" value="1"/>
</dbReference>
<dbReference type="InterPro" id="IPR005821">
    <property type="entry name" value="Ion_trans_dom"/>
</dbReference>
<dbReference type="InterPro" id="IPR015797">
    <property type="entry name" value="NUDIX_hydrolase-like_dom_sf"/>
</dbReference>
<dbReference type="InterPro" id="IPR000086">
    <property type="entry name" value="NUDIX_hydrolase_dom"/>
</dbReference>
<dbReference type="InterPro" id="IPR050927">
    <property type="entry name" value="TRPM"/>
</dbReference>
<dbReference type="InterPro" id="IPR041491">
    <property type="entry name" value="TRPM_SLOG"/>
</dbReference>
<dbReference type="PANTHER" id="PTHR13800:SF2">
    <property type="entry name" value="TRANSIENT RECEPTOR POTENTIAL CATION CHANNEL SUBFAMILY M MEMBER 2"/>
    <property type="match status" value="1"/>
</dbReference>
<dbReference type="PANTHER" id="PTHR13800">
    <property type="entry name" value="TRANSIENT RECEPTOR POTENTIAL CATION CHANNEL, SUBFAMILY M, MEMBER 6"/>
    <property type="match status" value="1"/>
</dbReference>
<dbReference type="Pfam" id="PF00520">
    <property type="entry name" value="Ion_trans"/>
    <property type="match status" value="1"/>
</dbReference>
<dbReference type="Pfam" id="PF18139">
    <property type="entry name" value="LSDAT_euk"/>
    <property type="match status" value="1"/>
</dbReference>
<dbReference type="Pfam" id="PF25508">
    <property type="entry name" value="TRPM2"/>
    <property type="match status" value="1"/>
</dbReference>
<dbReference type="SUPFAM" id="SSF55811">
    <property type="entry name" value="Nudix"/>
    <property type="match status" value="1"/>
</dbReference>
<dbReference type="PROSITE" id="PS51462">
    <property type="entry name" value="NUDIX"/>
    <property type="match status" value="1"/>
</dbReference>
<feature type="chain" id="PRO_0000215326" description="Transient receptor potential cation channel subfamily M member 2">
    <location>
        <begin position="1"/>
        <end position="1503"/>
    </location>
</feature>
<feature type="topological domain" description="Cytoplasmic" evidence="39">
    <location>
        <begin position="1"/>
        <end position="752"/>
    </location>
</feature>
<feature type="intramembrane region" evidence="27">
    <location>
        <begin position="753"/>
        <end position="769"/>
    </location>
</feature>
<feature type="topological domain" description="Cytoplasmic" evidence="39">
    <location>
        <begin position="770"/>
        <end position="795"/>
    </location>
</feature>
<feature type="transmembrane region" description="Helical" evidence="27">
    <location>
        <begin position="796"/>
        <end position="816"/>
    </location>
</feature>
<feature type="topological domain" description="Extracellular" evidence="39">
    <location>
        <begin position="817"/>
        <end position="827"/>
    </location>
</feature>
<feature type="transmembrane region" description="Helical" evidence="27">
    <location>
        <begin position="828"/>
        <end position="848"/>
    </location>
</feature>
<feature type="topological domain" description="Cytoplasmic" evidence="39">
    <location>
        <begin position="849"/>
        <end position="867"/>
    </location>
</feature>
<feature type="transmembrane region" description="Helical" evidence="27">
    <location>
        <begin position="868"/>
        <end position="888"/>
    </location>
</feature>
<feature type="topological domain" description="Extracellular" evidence="39">
    <location>
        <begin position="889"/>
        <end position="896"/>
    </location>
</feature>
<feature type="transmembrane region" description="Helical" evidence="27">
    <location>
        <begin position="897"/>
        <end position="917"/>
    </location>
</feature>
<feature type="topological domain" description="Cytoplasmic" evidence="39">
    <location>
        <begin position="918"/>
        <end position="929"/>
    </location>
</feature>
<feature type="transmembrane region" description="Helical" evidence="27">
    <location>
        <begin position="930"/>
        <end position="950"/>
    </location>
</feature>
<feature type="topological domain" description="Extracellular" evidence="39">
    <location>
        <begin position="951"/>
        <end position="970"/>
    </location>
</feature>
<feature type="intramembrane region" description="Pore-forming" evidence="27">
    <location>
        <begin position="971"/>
        <end position="985"/>
    </location>
</feature>
<feature type="topological domain" description="Extracellular" evidence="39">
    <location>
        <begin position="986"/>
        <end position="1022"/>
    </location>
</feature>
<feature type="transmembrane region" description="Helical" evidence="27">
    <location>
        <begin position="1023"/>
        <end position="1044"/>
    </location>
</feature>
<feature type="topological domain" description="Cytoplasmic" evidence="39">
    <location>
        <begin position="1045"/>
        <end position="1079"/>
    </location>
</feature>
<feature type="intramembrane region" evidence="27">
    <location>
        <begin position="1080"/>
        <end position="1098"/>
    </location>
</feature>
<feature type="topological domain" description="Cytoplasmic" evidence="39">
    <location>
        <begin position="1099"/>
        <end position="1503"/>
    </location>
</feature>
<feature type="domain" description="Nudix hydrolase" evidence="5">
    <location>
        <begin position="1354"/>
        <end position="1498"/>
    </location>
</feature>
<feature type="region of interest" description="Disordered" evidence="6">
    <location>
        <begin position="1"/>
        <end position="20"/>
    </location>
</feature>
<feature type="region of interest" description="Disordered" evidence="6">
    <location>
        <begin position="1206"/>
        <end position="1237"/>
    </location>
</feature>
<feature type="short sequence motif" description="Selectivity filter" evidence="30">
    <location>
        <begin position="979"/>
        <end position="982"/>
    </location>
</feature>
<feature type="short sequence motif" description="Nudix box" evidence="5">
    <location>
        <begin position="1390"/>
        <end position="1411"/>
    </location>
</feature>
<feature type="binding site" evidence="28 42">
    <location>
        <position position="174"/>
    </location>
    <ligand>
        <name>ADP-D-ribose</name>
        <dbReference type="ChEBI" id="CHEBI:57967"/>
        <label>1</label>
    </ligand>
</feature>
<feature type="binding site" evidence="28 42">
    <location>
        <position position="179"/>
    </location>
    <ligand>
        <name>ADP-D-ribose</name>
        <dbReference type="ChEBI" id="CHEBI:57967"/>
        <label>1</label>
    </ligand>
</feature>
<feature type="binding site" evidence="28 42">
    <location>
        <position position="302"/>
    </location>
    <ligand>
        <name>ADP-D-ribose</name>
        <dbReference type="ChEBI" id="CHEBI:57967"/>
        <label>1</label>
    </ligand>
</feature>
<feature type="binding site" evidence="28 42">
    <location>
        <position position="333"/>
    </location>
    <ligand>
        <name>ADP-D-ribose</name>
        <dbReference type="ChEBI" id="CHEBI:57967"/>
        <label>1</label>
    </ligand>
</feature>
<feature type="binding site" evidence="28 42">
    <location>
        <position position="336"/>
    </location>
    <ligand>
        <name>ADP-D-ribose</name>
        <dbReference type="ChEBI" id="CHEBI:57967"/>
        <label>1</label>
    </ligand>
</feature>
<feature type="binding site" evidence="28 40 43 44">
    <location>
        <position position="843"/>
    </location>
    <ligand>
        <name>Ca(2+)</name>
        <dbReference type="ChEBI" id="CHEBI:29108"/>
    </ligand>
</feature>
<feature type="binding site" evidence="28 40 43 44">
    <location>
        <position position="846"/>
    </location>
    <ligand>
        <name>Ca(2+)</name>
        <dbReference type="ChEBI" id="CHEBI:29108"/>
    </ligand>
</feature>
<feature type="binding site" evidence="28 40 43">
    <location>
        <position position="869"/>
    </location>
    <ligand>
        <name>Ca(2+)</name>
        <dbReference type="ChEBI" id="CHEBI:29108"/>
    </ligand>
</feature>
<feature type="binding site" evidence="40">
    <location>
        <position position="1073"/>
    </location>
    <ligand>
        <name>Ca(2+)</name>
        <dbReference type="ChEBI" id="CHEBI:29108"/>
    </ligand>
</feature>
<feature type="binding site" evidence="28 43">
    <location>
        <position position="1381"/>
    </location>
    <ligand>
        <name>ADP-D-ribose</name>
        <dbReference type="ChEBI" id="CHEBI:57967"/>
        <label>2</label>
    </ligand>
</feature>
<feature type="binding site" evidence="28 43">
    <location>
        <position position="1382"/>
    </location>
    <ligand>
        <name>ADP-D-ribose</name>
        <dbReference type="ChEBI" id="CHEBI:57967"/>
        <label>2</label>
    </ligand>
</feature>
<feature type="binding site" evidence="28 43">
    <location>
        <position position="1431"/>
    </location>
    <ligand>
        <name>ADP-D-ribose</name>
        <dbReference type="ChEBI" id="CHEBI:57967"/>
        <label>2</label>
    </ligand>
</feature>
<feature type="binding site" evidence="28 43">
    <location>
        <position position="1433"/>
    </location>
    <ligand>
        <name>ADP-D-ribose</name>
        <dbReference type="ChEBI" id="CHEBI:57967"/>
        <label>2</label>
    </ligand>
</feature>
<feature type="binding site" evidence="28 43">
    <location>
        <position position="1485"/>
    </location>
    <ligand>
        <name>ADP-D-ribose</name>
        <dbReference type="ChEBI" id="CHEBI:57967"/>
        <label>2</label>
    </ligand>
</feature>
<feature type="binding site" evidence="28 43">
    <location>
        <position position="1487"/>
    </location>
    <ligand>
        <name>ADP-D-ribose</name>
        <dbReference type="ChEBI" id="CHEBI:57967"/>
        <label>2</label>
    </ligand>
</feature>
<feature type="modified residue" description="Phosphothreonine" evidence="3">
    <location>
        <position position="740"/>
    </location>
</feature>
<feature type="disulfide bond" evidence="1">
    <location>
        <begin position="996"/>
        <end position="1008"/>
    </location>
</feature>
<feature type="splice variant" id="VSP_006574" description="In isoform 2." evidence="34">
    <location>
        <begin position="538"/>
        <end position="557"/>
    </location>
</feature>
<feature type="splice variant" id="VSP_013018" description="In isoform 3." evidence="35">
    <location>
        <begin position="847"/>
        <end position="1503"/>
    </location>
</feature>
<feature type="splice variant" id="VSP_006575" description="In isoform 2." evidence="34">
    <original>DTLEPLSTIQYNVVDGLRDRRSFHGPYTVQAGLPL</original>
    <variation>E</variation>
    <location>
        <begin position="1291"/>
        <end position="1325"/>
    </location>
</feature>
<feature type="sequence variant" id="VAR_025216" description="In dbSNP:rs45625933." evidence="33">
    <original>N</original>
    <variation>K</variation>
    <location>
        <position position="52"/>
    </location>
</feature>
<feature type="sequence variant" id="VAR_025217" description="In dbSNP:rs45544142." evidence="33">
    <original>V</original>
    <variation>I</variation>
    <location>
        <position position="166"/>
    </location>
</feature>
<feature type="sequence variant" id="VAR_025218" description="In dbSNP:rs45485992." evidence="33">
    <original>V</original>
    <variation>M</variation>
    <location>
        <position position="385"/>
    </location>
</feature>
<feature type="sequence variant" id="VAR_020032" description="In dbSNP:rs1556314." evidence="33">
    <original>D</original>
    <variation>E</variation>
    <location>
        <position position="543"/>
    </location>
</feature>
<feature type="sequence variant" id="VAR_025219" description="In dbSNP:rs9974927." evidence="33">
    <original>D</original>
    <variation>E</variation>
    <location>
        <position position="780"/>
    </location>
</feature>
<feature type="sequence variant" id="VAR_025220" description="In dbSNP:rs9978351." evidence="10 11 13 31 32">
    <original>Q</original>
    <variation>R</variation>
    <location>
        <position position="1189"/>
    </location>
</feature>
<feature type="sequence variant" id="VAR_025221" description="In dbSNP:rs45611537." evidence="33">
    <original>R</original>
    <variation>W</variation>
    <location>
        <position position="1199"/>
    </location>
</feature>
<feature type="sequence variant" id="VAR_025222" description="In dbSNP:rs45519835." evidence="33">
    <original>S</original>
    <variation>G</variation>
    <location>
        <position position="1201"/>
    </location>
</feature>
<feature type="sequence variant" id="VAR_025223" description="In dbSNP:rs45513700." evidence="33">
    <original>N</original>
    <variation>S</variation>
    <location>
        <position position="1249"/>
    </location>
</feature>
<feature type="sequence variant" id="VAR_025224" description="In dbSNP:rs45589233." evidence="33">
    <original>T</original>
    <variation>M</variation>
    <location>
        <position position="1347"/>
    </location>
</feature>
<feature type="sequence variant" id="VAR_025225" description="In dbSNP:rs45570639." evidence="33">
    <original>E</original>
    <variation>K</variation>
    <location>
        <position position="1359"/>
    </location>
</feature>
<feature type="sequence variant" id="VAR_025226" description="In dbSNP:rs45613636." evidence="33">
    <original>I</original>
    <variation>M</variation>
    <location>
        <position position="1368"/>
    </location>
</feature>
<feature type="sequence variant" id="VAR_025227" description="In dbSNP:rs45578242." evidence="33">
    <original>A</original>
    <variation>S</variation>
    <location>
        <position position="1438"/>
    </location>
</feature>
<feature type="mutagenesis site" description="Abolishes lowering of temperature threshold for activation in response to reactive oxygen species. Abolishes channel activation in response to ADPR/Ca(2+)." evidence="19 28">
    <original>M</original>
    <variation>A</variation>
    <location>
        <position position="215"/>
    </location>
</feature>
<feature type="mutagenesis site" description="Abolishes channel activation in response to ADP-ribose/Ca(2+)." evidence="28">
    <original>Y</original>
    <variation>A</variation>
    <location>
        <position position="295"/>
    </location>
</feature>
<feature type="mutagenesis site" description="No significant effect on channel activity; when associated with A-358. Abolishes channel activation in response to ADP-ribose/Ca(2+)." evidence="27 28">
    <original>R</original>
    <variation>A</variation>
    <location>
        <position position="302"/>
    </location>
</feature>
<feature type="mutagenesis site" description="No significant effect on channel activity; when associated with A-302." evidence="27 28">
    <original>R</original>
    <variation>A</variation>
    <location>
        <position position="358"/>
    </location>
</feature>
<feature type="mutagenesis site" description="Decreases in sensitivity to PIP2." evidence="29">
    <original>K</original>
    <variation>A</variation>
    <location>
        <position position="918"/>
    </location>
</feature>
<feature type="mutagenesis site" description="Strongly reduces channel activity at ph 7.3. Increased residual channel activity after exposure to pH 5.5." evidence="18">
    <original>K</original>
    <variation>A</variation>
    <location>
        <position position="952"/>
    </location>
</feature>
<feature type="mutagenesis site" description="No effect on channel activity." evidence="18">
    <original>H</original>
    <variation>A</variation>
    <location>
        <position position="958"/>
    </location>
</feature>
<feature type="mutagenesis site" description="Mildly decreases channel activity." evidence="18">
    <original>R</original>
    <variation>A</variation>
    <location>
        <position position="961"/>
    </location>
</feature>
<feature type="mutagenesis site" description="Abolishes channel activity." evidence="18">
    <original>R</original>
    <variation>A</variation>
    <location>
        <position position="962"/>
    </location>
</feature>
<feature type="mutagenesis site" description="Abolishes channel activity." evidence="18">
    <original>R</original>
    <variation>A</variation>
    <location>
        <position position="968"/>
    </location>
</feature>
<feature type="mutagenesis site" description="No effect on channel activity." evidence="18">
    <original>H</original>
    <variation>A</variation>
    <location>
        <position position="973"/>
    </location>
</feature>
<feature type="mutagenesis site" description="Decreases permeability of Ca(2+) over Na(+)." evidence="30">
    <original>G</original>
    <variation>A</variation>
    <variation>C</variation>
    <variation>S</variation>
    <location>
        <position position="980"/>
    </location>
</feature>
<feature type="mutagenesis site" description="Increases the permeability of Ca(2+) over Na(+)." evidence="30">
    <original>Q</original>
    <variation>A</variation>
    <variation>E</variation>
    <variation>N</variation>
    <location>
        <position position="981"/>
    </location>
</feature>
<feature type="mutagenesis site" description="Alters the reversal potential. Increases the permeability of Ca(2+) over Na(+)." evidence="30">
    <original>I</original>
    <variation>A</variation>
    <variation>E</variation>
    <variation>S</variation>
    <location>
        <position position="982"/>
    </location>
</feature>
<feature type="mutagenesis site" description="No change in the reversal potential. No change in the ion selectivity to Ca(2+) over Na(+)." evidence="30">
    <original>I</original>
    <variation>L</variation>
    <variation>F</variation>
    <location>
        <position position="982"/>
    </location>
</feature>
<feature type="mutagenesis site" description="Prevents fast inactivation of the channel." evidence="26">
    <original>GY</original>
    <variation>LDE</variation>
    <location>
        <begin position="984"/>
        <end position="985"/>
    </location>
</feature>
<feature type="mutagenesis site" description="No change in the reversal potential. No change in the ion selectivity to Ca(2+) over Na(+)." evidence="30">
    <original>G</original>
    <variation>A</variation>
    <location>
        <position position="984"/>
    </location>
</feature>
<feature type="mutagenesis site" description="No change in the reversal potential. No change in the ion selectivity to Ca(2+) over Na(+)." evidence="30">
    <original>Y</original>
    <variation>A</variation>
    <location>
        <position position="985"/>
    </location>
</feature>
<feature type="mutagenesis site" description="Moderately decreases channel activity." evidence="18">
    <original>H</original>
    <variation>A</variation>
    <location>
        <position position="995"/>
    </location>
</feature>
<feature type="mutagenesis site" description="Strongly increased residual channel activity after exposure to pH 5.5." evidence="18">
    <original>D</original>
    <variation>A</variation>
    <location>
        <position position="1002"/>
    </location>
</feature>
<feature type="mutagenesis site" description="Decreases channel activity." evidence="18">
    <original>K</original>
    <variation>A</variation>
    <location>
        <position position="1005"/>
    </location>
</feature>
<feature type="mutagenesis site" description="Nearly abolishes channel activity." evidence="18">
    <original>K</original>
    <variation>A</variation>
    <location>
        <position position="1007"/>
    </location>
</feature>
<feature type="mutagenesis site" description="Decreases in sensitivity to PIP2." evidence="29">
    <original>R</original>
    <variation>A</variation>
    <location>
        <position position="1077"/>
    </location>
</feature>
<feature type="mutagenesis site" description="Loss of channel activity." evidence="27">
    <location>
        <begin position="1228"/>
        <end position="1503"/>
    </location>
</feature>
<feature type="mutagenesis site" description="Only slight effect on activity." evidence="9">
    <original>M</original>
    <variation>I</variation>
    <location>
        <position position="1397"/>
    </location>
</feature>
<feature type="mutagenesis site" description="No effect on channel activity; when associated with G-1407." evidence="21">
    <original>R</original>
    <variation>Q</variation>
    <location>
        <position position="1400"/>
    </location>
</feature>
<feature type="mutagenesis site" description="Abolishes channel activity." evidence="12">
    <original>R</original>
    <variation>Q</variation>
    <location>
        <position position="1404"/>
    </location>
</feature>
<feature type="mutagenesis site" description="Decreased channel activity in response to ADP-ribose." evidence="12">
    <original>ILRQ</original>
    <variation>EFRE</variation>
    <location>
        <begin position="1405"/>
        <end position="1408"/>
    </location>
</feature>
<feature type="mutagenesis site" description="No effect on channel activity; when associated with Q-1400." evidence="21">
    <original>R</original>
    <variation>G</variation>
    <location>
        <position position="1407"/>
    </location>
</feature>
<feature type="mutagenesis site" description="Expected to abolish the initially proposed hydrolase activity. Does not abolish channel activity in response to ADP-ribose." evidence="12">
    <original>QE</original>
    <variation>KK</variation>
    <location>
        <begin position="1408"/>
        <end position="1409"/>
    </location>
</feature>
<feature type="mutagenesis site" description="Decreased channel activity." evidence="12">
    <original>Q</original>
    <variation>E</variation>
    <location>
        <position position="1408"/>
    </location>
</feature>
<feature type="mutagenesis site" description="Abolishes channel activation in response to ADP-ribose/Ca(2+)." evidence="28">
    <original>R</original>
    <variation>A</variation>
    <location>
        <position position="1433"/>
    </location>
</feature>
<feature type="sequence conflict" description="In Ref. 2; CAD01139." evidence="39" ref="2">
    <original>S</original>
    <variation>N</variation>
    <location>
        <position position="1088"/>
    </location>
</feature>
<feature type="helix" evidence="47">
    <location>
        <begin position="57"/>
        <end position="66"/>
    </location>
</feature>
<feature type="strand" evidence="47">
    <location>
        <begin position="68"/>
        <end position="71"/>
    </location>
</feature>
<feature type="strand" evidence="47">
    <location>
        <begin position="89"/>
        <end position="91"/>
    </location>
</feature>
<feature type="strand" evidence="47">
    <location>
        <begin position="94"/>
        <end position="98"/>
    </location>
</feature>
<feature type="helix" evidence="47">
    <location>
        <begin position="115"/>
        <end position="118"/>
    </location>
</feature>
<feature type="strand" evidence="47">
    <location>
        <begin position="120"/>
        <end position="123"/>
    </location>
</feature>
<feature type="strand" evidence="47">
    <location>
        <begin position="128"/>
        <end position="132"/>
    </location>
</feature>
<feature type="turn" evidence="47">
    <location>
        <begin position="133"/>
        <end position="135"/>
    </location>
</feature>
<feature type="strand" evidence="47">
    <location>
        <begin position="140"/>
        <end position="145"/>
    </location>
</feature>
<feature type="helix" evidence="47">
    <location>
        <begin position="151"/>
        <end position="160"/>
    </location>
</feature>
<feature type="turn" evidence="47">
    <location>
        <begin position="161"/>
        <end position="163"/>
    </location>
</feature>
<feature type="strand" evidence="47">
    <location>
        <begin position="168"/>
        <end position="174"/>
    </location>
</feature>
<feature type="helix" evidence="47">
    <location>
        <begin position="184"/>
        <end position="201"/>
    </location>
</feature>
<feature type="strand" evidence="47">
    <location>
        <begin position="203"/>
        <end position="208"/>
    </location>
</feature>
<feature type="strand" evidence="47">
    <location>
        <begin position="210"/>
        <end position="212"/>
    </location>
</feature>
<feature type="helix" evidence="47">
    <location>
        <begin position="214"/>
        <end position="228"/>
    </location>
</feature>
<feature type="helix" evidence="47">
    <location>
        <begin position="233"/>
        <end position="235"/>
    </location>
</feature>
<feature type="strand" evidence="47">
    <location>
        <begin position="237"/>
        <end position="244"/>
    </location>
</feature>
<feature type="helix" evidence="47">
    <location>
        <begin position="250"/>
        <end position="252"/>
    </location>
</feature>
<feature type="strand" evidence="47">
    <location>
        <begin position="273"/>
        <end position="275"/>
    </location>
</feature>
<feature type="strand" evidence="47">
    <location>
        <begin position="282"/>
        <end position="287"/>
    </location>
</feature>
<feature type="helix" evidence="47">
    <location>
        <begin position="299"/>
        <end position="309"/>
    </location>
</feature>
<feature type="strand" evidence="47">
    <location>
        <begin position="313"/>
        <end position="316"/>
    </location>
</feature>
<feature type="strand" evidence="47">
    <location>
        <begin position="319"/>
        <end position="322"/>
    </location>
</feature>
<feature type="strand" evidence="47">
    <location>
        <begin position="325"/>
        <end position="329"/>
    </location>
</feature>
<feature type="helix" evidence="47">
    <location>
        <begin position="334"/>
        <end position="345"/>
    </location>
</feature>
<feature type="strand" evidence="47">
    <location>
        <begin position="354"/>
        <end position="356"/>
    </location>
</feature>
<feature type="helix" evidence="47">
    <location>
        <begin position="360"/>
        <end position="366"/>
    </location>
</feature>
<feature type="turn" evidence="47">
    <location>
        <begin position="371"/>
        <end position="373"/>
    </location>
</feature>
<feature type="helix" evidence="47">
    <location>
        <begin position="376"/>
        <end position="386"/>
    </location>
</feature>
<feature type="turn" evidence="47">
    <location>
        <begin position="391"/>
        <end position="393"/>
    </location>
</feature>
<feature type="helix" evidence="47">
    <location>
        <begin position="399"/>
        <end position="411"/>
    </location>
</feature>
<feature type="turn" evidence="47">
    <location>
        <begin position="413"/>
        <end position="415"/>
    </location>
</feature>
<feature type="turn" evidence="47">
    <location>
        <begin position="421"/>
        <end position="423"/>
    </location>
</feature>
<feature type="helix" evidence="47">
    <location>
        <begin position="430"/>
        <end position="442"/>
    </location>
</feature>
<feature type="strand" evidence="47">
    <location>
        <begin position="447"/>
        <end position="449"/>
    </location>
</feature>
<feature type="helix" evidence="47">
    <location>
        <begin position="450"/>
        <end position="461"/>
    </location>
</feature>
<feature type="helix" evidence="47">
    <location>
        <begin position="466"/>
        <end position="470"/>
    </location>
</feature>
<feature type="turn" evidence="47">
    <location>
        <begin position="471"/>
        <end position="473"/>
    </location>
</feature>
<feature type="strand" evidence="47">
    <location>
        <begin position="474"/>
        <end position="476"/>
    </location>
</feature>
<feature type="helix" evidence="47">
    <location>
        <begin position="481"/>
        <end position="484"/>
    </location>
</feature>
<feature type="helix" evidence="47">
    <location>
        <begin position="485"/>
        <end position="493"/>
    </location>
</feature>
<feature type="helix" evidence="47">
    <location>
        <begin position="497"/>
        <end position="505"/>
    </location>
</feature>
<feature type="helix" evidence="47">
    <location>
        <begin position="510"/>
        <end position="513"/>
    </location>
</feature>
<feature type="helix" evidence="47">
    <location>
        <begin position="516"/>
        <end position="522"/>
    </location>
</feature>
<feature type="helix" evidence="47">
    <location>
        <begin position="531"/>
        <end position="541"/>
    </location>
</feature>
<feature type="helix" evidence="47">
    <location>
        <begin position="545"/>
        <end position="549"/>
    </location>
</feature>
<feature type="helix" evidence="47">
    <location>
        <begin position="558"/>
        <end position="569"/>
    </location>
</feature>
<feature type="helix" evidence="47">
    <location>
        <begin position="621"/>
        <end position="630"/>
    </location>
</feature>
<feature type="turn" evidence="47">
    <location>
        <begin position="631"/>
        <end position="633"/>
    </location>
</feature>
<feature type="helix" evidence="47">
    <location>
        <begin position="635"/>
        <end position="641"/>
    </location>
</feature>
<feature type="helix" evidence="47">
    <location>
        <begin position="642"/>
        <end position="644"/>
    </location>
</feature>
<feature type="helix" evidence="47">
    <location>
        <begin position="648"/>
        <end position="662"/>
    </location>
</feature>
<feature type="helix" evidence="47">
    <location>
        <begin position="669"/>
        <end position="696"/>
    </location>
</feature>
<feature type="turn" evidence="47">
    <location>
        <begin position="699"/>
        <end position="702"/>
    </location>
</feature>
<feature type="helix" evidence="47">
    <location>
        <begin position="703"/>
        <end position="705"/>
    </location>
</feature>
<feature type="strand" evidence="47">
    <location>
        <begin position="707"/>
        <end position="709"/>
    </location>
</feature>
<feature type="turn" evidence="47">
    <location>
        <begin position="710"/>
        <end position="713"/>
    </location>
</feature>
<feature type="strand" evidence="47">
    <location>
        <begin position="714"/>
        <end position="716"/>
    </location>
</feature>
<feature type="helix" evidence="47">
    <location>
        <begin position="717"/>
        <end position="723"/>
    </location>
</feature>
<feature type="helix" evidence="47">
    <location>
        <begin position="727"/>
        <end position="730"/>
    </location>
</feature>
<feature type="helix" evidence="47">
    <location>
        <begin position="734"/>
        <end position="744"/>
    </location>
</feature>
<feature type="helix" evidence="47">
    <location>
        <begin position="753"/>
        <end position="761"/>
    </location>
</feature>
<feature type="turn" evidence="47">
    <location>
        <begin position="764"/>
        <end position="769"/>
    </location>
</feature>
<feature type="helix" evidence="47">
    <location>
        <begin position="777"/>
        <end position="780"/>
    </location>
</feature>
<feature type="helix" evidence="47">
    <location>
        <begin position="784"/>
        <end position="793"/>
    </location>
</feature>
<feature type="helix" evidence="47">
    <location>
        <begin position="795"/>
        <end position="818"/>
    </location>
</feature>
<feature type="helix" evidence="47">
    <location>
        <begin position="827"/>
        <end position="847"/>
    </location>
</feature>
<feature type="helix" evidence="47">
    <location>
        <begin position="856"/>
        <end position="864"/>
    </location>
</feature>
<feature type="helix" evidence="47">
    <location>
        <begin position="867"/>
        <end position="887"/>
    </location>
</feature>
<feature type="helix" evidence="47">
    <location>
        <begin position="889"/>
        <end position="891"/>
    </location>
</feature>
<feature type="helix" evidence="47">
    <location>
        <begin position="892"/>
        <end position="907"/>
    </location>
</feature>
<feature type="helix" evidence="47">
    <location>
        <begin position="908"/>
        <end position="915"/>
    </location>
</feature>
<feature type="turn" evidence="47">
    <location>
        <begin position="918"/>
        <end position="920"/>
    </location>
</feature>
<feature type="helix" evidence="47">
    <location>
        <begin position="921"/>
        <end position="955"/>
    </location>
</feature>
<feature type="strand" evidence="47">
    <location>
        <begin position="963"/>
        <end position="965"/>
    </location>
</feature>
<feature type="helix" evidence="47">
    <location>
        <begin position="966"/>
        <end position="979"/>
    </location>
</feature>
<feature type="helix" evidence="47">
    <location>
        <begin position="1021"/>
        <end position="1035"/>
    </location>
</feature>
<feature type="turn" evidence="47">
    <location>
        <begin position="1036"/>
        <end position="1038"/>
    </location>
</feature>
<feature type="helix" evidence="47">
    <location>
        <begin position="1039"/>
        <end position="1055"/>
    </location>
</feature>
<feature type="turn" evidence="47">
    <location>
        <begin position="1056"/>
        <end position="1058"/>
    </location>
</feature>
<feature type="helix" evidence="47">
    <location>
        <begin position="1059"/>
        <end position="1076"/>
    </location>
</feature>
<feature type="turn" evidence="47">
    <location>
        <begin position="1082"/>
        <end position="1085"/>
    </location>
</feature>
<feature type="helix" evidence="47">
    <location>
        <begin position="1086"/>
        <end position="1097"/>
    </location>
</feature>
<feature type="turn" evidence="47">
    <location>
        <begin position="1107"/>
        <end position="1109"/>
    </location>
</feature>
<feature type="helix" evidence="47">
    <location>
        <begin position="1115"/>
        <end position="1141"/>
    </location>
</feature>
<feature type="helix" evidence="47">
    <location>
        <begin position="1144"/>
        <end position="1164"/>
    </location>
</feature>
<feature type="turn" evidence="47">
    <location>
        <begin position="1240"/>
        <end position="1242"/>
    </location>
</feature>
<feature type="strand" evidence="47">
    <location>
        <begin position="1259"/>
        <end position="1261"/>
    </location>
</feature>
<feature type="strand" evidence="47">
    <location>
        <begin position="1275"/>
        <end position="1277"/>
    </location>
</feature>
<feature type="helix" evidence="47">
    <location>
        <begin position="1279"/>
        <end position="1281"/>
    </location>
</feature>
<feature type="strand" evidence="47">
    <location>
        <begin position="1282"/>
        <end position="1286"/>
    </location>
</feature>
<feature type="helix" evidence="47">
    <location>
        <begin position="1289"/>
        <end position="1291"/>
    </location>
</feature>
<feature type="strand" evidence="47">
    <location>
        <begin position="1301"/>
        <end position="1303"/>
    </location>
</feature>
<feature type="strand" evidence="47">
    <location>
        <begin position="1334"/>
        <end position="1337"/>
    </location>
</feature>
<feature type="strand" evidence="47">
    <location>
        <begin position="1339"/>
        <end position="1343"/>
    </location>
</feature>
<feature type="strand" evidence="47">
    <location>
        <begin position="1346"/>
        <end position="1355"/>
    </location>
</feature>
<feature type="strand" evidence="47">
    <location>
        <begin position="1359"/>
        <end position="1361"/>
    </location>
</feature>
<feature type="strand" evidence="47">
    <location>
        <begin position="1367"/>
        <end position="1370"/>
    </location>
</feature>
<feature type="strand" evidence="47">
    <location>
        <begin position="1372"/>
        <end position="1378"/>
    </location>
</feature>
<feature type="turn" evidence="47">
    <location>
        <begin position="1380"/>
        <end position="1382"/>
    </location>
</feature>
<feature type="strand" evidence="47">
    <location>
        <begin position="1383"/>
        <end position="1386"/>
    </location>
</feature>
<feature type="strand" evidence="47">
    <location>
        <begin position="1393"/>
        <end position="1397"/>
    </location>
</feature>
<feature type="helix" evidence="47">
    <location>
        <begin position="1398"/>
        <end position="1403"/>
    </location>
</feature>
<feature type="turn" evidence="47">
    <location>
        <begin position="1404"/>
        <end position="1407"/>
    </location>
</feature>
<feature type="helix" evidence="47">
    <location>
        <begin position="1410"/>
        <end position="1418"/>
    </location>
</feature>
<feature type="strand" evidence="47">
    <location>
        <begin position="1422"/>
        <end position="1429"/>
    </location>
</feature>
<feature type="strand" evidence="47">
    <location>
        <begin position="1436"/>
        <end position="1438"/>
    </location>
</feature>
<feature type="strand" evidence="47">
    <location>
        <begin position="1440"/>
        <end position="1449"/>
    </location>
</feature>
<feature type="strand" evidence="47">
    <location>
        <begin position="1452"/>
        <end position="1454"/>
    </location>
</feature>
<feature type="helix" evidence="47">
    <location>
        <begin position="1456"/>
        <end position="1462"/>
    </location>
</feature>
<feature type="strand" evidence="47">
    <location>
        <begin position="1471"/>
        <end position="1477"/>
    </location>
</feature>
<feature type="helix" evidence="47">
    <location>
        <begin position="1488"/>
        <end position="1495"/>
    </location>
</feature>
<feature type="turn" evidence="47">
    <location>
        <begin position="1496"/>
        <end position="1500"/>
    </location>
</feature>
<organism>
    <name type="scientific">Homo sapiens</name>
    <name type="common">Human</name>
    <dbReference type="NCBI Taxonomy" id="9606"/>
    <lineage>
        <taxon>Eukaryota</taxon>
        <taxon>Metazoa</taxon>
        <taxon>Chordata</taxon>
        <taxon>Craniata</taxon>
        <taxon>Vertebrata</taxon>
        <taxon>Euteleostomi</taxon>
        <taxon>Mammalia</taxon>
        <taxon>Eutheria</taxon>
        <taxon>Euarchontoglires</taxon>
        <taxon>Primates</taxon>
        <taxon>Haplorrhini</taxon>
        <taxon>Catarrhini</taxon>
        <taxon>Hominidae</taxon>
        <taxon>Homo</taxon>
    </lineage>
</organism>
<name>TRPM2_HUMAN</name>
<gene>
    <name type="primary">TRPM2</name>
    <name evidence="38" type="synonym">EREG1</name>
    <name type="synonym">KNP3</name>
    <name evidence="34" type="synonym">LTRPC2</name>
    <name evidence="37" type="synonym">TRPC7</name>
</gene>
<proteinExistence type="evidence at protein level"/>
<evidence type="ECO:0000250" key="1">
    <source>
        <dbReference type="UniProtKB" id="A0A0R4IMY7"/>
    </source>
</evidence>
<evidence type="ECO:0000250" key="2">
    <source>
        <dbReference type="UniProtKB" id="E9PTA2"/>
    </source>
</evidence>
<evidence type="ECO:0000250" key="3">
    <source>
        <dbReference type="UniProtKB" id="Q91YD4"/>
    </source>
</evidence>
<evidence type="ECO:0000255" key="4"/>
<evidence type="ECO:0000255" key="5">
    <source>
        <dbReference type="PROSITE-ProRule" id="PRU00794"/>
    </source>
</evidence>
<evidence type="ECO:0000256" key="6">
    <source>
        <dbReference type="SAM" id="MobiDB-lite"/>
    </source>
</evidence>
<evidence type="ECO:0000269" key="7">
    <source>
    </source>
</evidence>
<evidence type="ECO:0000269" key="8">
    <source>
    </source>
</evidence>
<evidence type="ECO:0000269" key="9">
    <source>
    </source>
</evidence>
<evidence type="ECO:0000269" key="10">
    <source>
    </source>
</evidence>
<evidence type="ECO:0000269" key="11">
    <source>
    </source>
</evidence>
<evidence type="ECO:0000269" key="12">
    <source>
    </source>
</evidence>
<evidence type="ECO:0000269" key="13">
    <source>
    </source>
</evidence>
<evidence type="ECO:0000269" key="14">
    <source>
    </source>
</evidence>
<evidence type="ECO:0000269" key="15">
    <source>
    </source>
</evidence>
<evidence type="ECO:0000269" key="16">
    <source>
    </source>
</evidence>
<evidence type="ECO:0000269" key="17">
    <source>
    </source>
</evidence>
<evidence type="ECO:0000269" key="18">
    <source>
    </source>
</evidence>
<evidence type="ECO:0000269" key="19">
    <source>
    </source>
</evidence>
<evidence type="ECO:0000269" key="20">
    <source>
    </source>
</evidence>
<evidence type="ECO:0000269" key="21">
    <source>
    </source>
</evidence>
<evidence type="ECO:0000269" key="22">
    <source>
    </source>
</evidence>
<evidence type="ECO:0000269" key="23">
    <source>
    </source>
</evidence>
<evidence type="ECO:0000269" key="24">
    <source>
    </source>
</evidence>
<evidence type="ECO:0000269" key="25">
    <source>
    </source>
</evidence>
<evidence type="ECO:0000269" key="26">
    <source>
    </source>
</evidence>
<evidence type="ECO:0000269" key="27">
    <source>
    </source>
</evidence>
<evidence type="ECO:0000269" key="28">
    <source>
    </source>
</evidence>
<evidence type="ECO:0000269" key="29">
    <source>
    </source>
</evidence>
<evidence type="ECO:0000269" key="30">
    <source>
    </source>
</evidence>
<evidence type="ECO:0000269" key="31">
    <source>
    </source>
</evidence>
<evidence type="ECO:0000269" key="32">
    <source ref="5"/>
</evidence>
<evidence type="ECO:0000269" key="33">
    <source ref="6"/>
</evidence>
<evidence type="ECO:0000303" key="34">
    <source>
    </source>
</evidence>
<evidence type="ECO:0000303" key="35">
    <source>
    </source>
</evidence>
<evidence type="ECO:0000303" key="36">
    <source>
    </source>
</evidence>
<evidence type="ECO:0000303" key="37">
    <source>
    </source>
</evidence>
<evidence type="ECO:0000303" key="38">
    <source ref="9"/>
</evidence>
<evidence type="ECO:0000305" key="39"/>
<evidence type="ECO:0000305" key="40">
    <source>
    </source>
</evidence>
<evidence type="ECO:0007744" key="41">
    <source>
        <dbReference type="PDB" id="6PUO"/>
    </source>
</evidence>
<evidence type="ECO:0007744" key="42">
    <source>
        <dbReference type="PDB" id="6PUR"/>
    </source>
</evidence>
<evidence type="ECO:0007744" key="43">
    <source>
        <dbReference type="PDB" id="6PUS"/>
    </source>
</evidence>
<evidence type="ECO:0007744" key="44">
    <source>
        <dbReference type="PDB" id="6PUU"/>
    </source>
</evidence>
<evidence type="ECO:0007744" key="45">
    <source>
        <dbReference type="PDB" id="7VQ1"/>
    </source>
</evidence>
<evidence type="ECO:0007744" key="46">
    <source>
        <dbReference type="PDB" id="7VQ2"/>
    </source>
</evidence>
<evidence type="ECO:0007829" key="47">
    <source>
        <dbReference type="PDB" id="6PUO"/>
    </source>
</evidence>
<comment type="function">
    <molecule>Isoform 1</molecule>
    <text evidence="3 7 8 9 10 11 12 14 15 16 17 18 19 20 21 22 23 24 25 26 27 28 30">Nonselective, voltage-independent cation channel that mediates Na(+) and Ca(2+) influx, leading to increased cytoplasmic Ca(2+) levels (PubMed:11385575, PubMed:11509734, PubMed:11804595, PubMed:12594222, PubMed:15561722, PubMed:16601673, PubMed:19171771, PubMed:20660597, PubMed:25620041, PubMed:27068538, PubMed:27383051, PubMed:28775320, PubMed:29745897, PubMed:30467180, PubMed:31513012, PubMed:34788616). Functions as a ligand-gated ion channel, gated by intracellular adenosine diphosphate ribose (ADP-ribose), Ca(2+), warm temperature, and oxidative stress (PubMed:19171771, PubMed:25620041, PubMed:28775320, PubMed:30467180). The precise physiological activators are under debate; the true, physiological activators may be ADP-ribose and ADP-ribose-2'-phosphate (PubMed:20650899, PubMed:25918360). Binding of ADP-ribose to the cytoplasmic Nudix domain causes a conformation change; the channel is primed but still requires Ca(2+) binding to trigger channel opening (PubMed:19171771, PubMed:25620041, PubMed:28775320, PubMed:29745897, PubMed:30467180). Extracellular Ca(2+) passes through the channel and increases channel activity (PubMed:19171771). Contributes to Ca(2+) release from intracellular stores in response to ADP-ribose (PubMed:19454650). Plays a role in numerous processes that involve signaling via intracellular Ca(2+) levels (Probable). Besides, mediates the release of lysosomal Zn(2+) stores in response to reactive oxygen species, leading to increased cytosolic Zn(2+) levels (PubMed:25562606, PubMed:27068538). Plays a role in mediating behavorial and physiological responses to moderate heat and thereby contributes to body temperature homeostasis. Plays a role in insulin secretion, a process that requires increased cytoplasmic Ca(2+) levels (By similarity). Required for normal IFNG and cytokine secretion and normal innate immune immunity in response to bacterial infection. Required for normal phagocytosis and cytokine release by macrophages exposed to zymosan (in vitro) (PubMed:22493272). Plays a role in dendritic cell differentiation and maturation, and in dendritic cell chemotaxis via its role in regulating cytoplasmic Ca(2+) levels (By similarity). Plays a role in the regulation of the reorganization of the actin cytoskeleton and filopodia formation in response to reactive oxygen species via its role in increasing cytoplasmic Ca(2+) and Zn(2+) levels (PubMed:27068538). Confers susceptibility to cell death following oxidative stress (PubMed:12594222, PubMed:25562606).</text>
</comment>
<comment type="function">
    <molecule>Isoform 2</molecule>
    <text evidence="10">Lacks cation channel activity. Does not mediate cation transport in response to oxidative stress or ADP-ribose.</text>
</comment>
<comment type="function">
    <molecule>Isoform 3</molecule>
    <text evidence="11">Lacks cation channel activity and negatively regulates the channel activity of isoform 1. Negatively regulates susceptibility to cell death in reposponse to oxidative stress.</text>
</comment>
<comment type="catalytic activity">
    <reaction evidence="7 8">
        <text>Ca(2+)(in) = Ca(2+)(out)</text>
        <dbReference type="Rhea" id="RHEA:29671"/>
        <dbReference type="ChEBI" id="CHEBI:29108"/>
    </reaction>
</comment>
<comment type="catalytic activity">
    <reaction evidence="30">
        <text>Na(+)(in) = Na(+)(out)</text>
        <dbReference type="Rhea" id="RHEA:34963"/>
        <dbReference type="ChEBI" id="CHEBI:29101"/>
    </reaction>
</comment>
<comment type="activity regulation">
    <text evidence="7 8 9 10 12 18 21 23 24 25 27 29">Activated by intracellular ADP-ribose, beta-NAD (NAD(+)) and similar compounds, and by oxidative stress caused by reactive oxygen or nitrogen species (PubMed:11385575, PubMed:11509734, PubMed:11804595, PubMed:11960981, PubMed:15561722, PubMed:16601673, PubMed:19171771, PubMed:25620041, PubMed:27068538, PubMed:27383051, PubMed:30467180). Ca(2+) and PI(4,5)P2 are required for channel opening by ADP-ribose (PubMed:11385575, PubMed:33924946). Activation by ADP-ribose and beta-NAD is strongly increased by moderate heat (35 to 40 degrees Celsius) (PubMed:16601673). Likewise, reactive oxygen species lower the threshold for activation by moderate heat (37 degrees Celsius) (PubMed:22493272). Activated by moderate heat (35 to 40 degrees Celsius) (PubMed:16601673). Inactivated by exposure to extracellular pH between 4.0 and 6.5; irreversibly inactivated when open channels are exposed to extracellular pH between 4.0 and 6.5, while pre-exposure of closed channels to extracellular pH 5.5 gives rise to currents that rapidly inactivate, but protects against irreversible inactivation (PubMed:20660597). Inactivated by intracellular ATP (PubMed:11509734). Activated by arachidonic acid (PubMed:11804595). Inhibited by 2-aminoethyl diphenylborinate (2-APB) (PubMed:28775320).</text>
</comment>
<comment type="subunit">
    <text evidence="11 27">Homotetramer (PubMed:30467180, PubMed:31513012). Isoform 1 can interact with isoform 3. This interaction decreases Ca(2+) influx through isoform 1 and suppresses susceptibility to oxidative stress-induced cell death.</text>
</comment>
<comment type="subcellular location">
    <subcellularLocation>
        <location evidence="7 8 9 11 12 14 15 17 18 19 22 23 24 27">Cell membrane</location>
        <topology evidence="27">Multi-pass membrane protein</topology>
    </subcellularLocation>
    <subcellularLocation>
        <location evidence="2">Perikaryon</location>
    </subcellularLocation>
    <subcellularLocation>
        <location evidence="2">Cell projection</location>
    </subcellularLocation>
    <subcellularLocation>
        <location evidence="2">Cytoplasmic vesicle</location>
    </subcellularLocation>
    <subcellularLocation>
        <location evidence="23">Lysosome</location>
    </subcellularLocation>
    <text evidence="2 3">Detected at the cell membrane and in intracellular vesicles in cortical neurons. Detected on neuronal cell bodies and neurites (By similarity). Detected on the cell membrane in polymorphonuclear neutrophils. Detected on cytoplasmic vesicles and lysosomes in immature bone marrow dendritic cells (By similarity).</text>
</comment>
<comment type="subcellular location">
    <molecule>Isoform 1</molecule>
    <subcellularLocation>
        <location evidence="10 11">Cell membrane</location>
        <topology evidence="4">Multi-pass membrane protein</topology>
    </subcellularLocation>
</comment>
<comment type="subcellular location">
    <molecule>Isoform 2</molecule>
    <subcellularLocation>
        <location evidence="10">Cell membrane</location>
        <topology evidence="4">Multi-pass membrane protein</topology>
    </subcellularLocation>
</comment>
<comment type="subcellular location">
    <molecule>Isoform 3</molecule>
    <subcellularLocation>
        <location evidence="11">Cell membrane</location>
        <topology evidence="4">Multi-pass membrane protein</topology>
    </subcellularLocation>
</comment>
<comment type="alternative products">
    <event type="alternative splicing"/>
    <isoform>
        <id>O94759-1</id>
        <name>1</name>
        <name>TRPM2-L</name>
        <sequence type="displayed"/>
    </isoform>
    <isoform>
        <id>O94759-2</id>
        <name>2</name>
        <sequence type="described" ref="VSP_006574 VSP_006575"/>
    </isoform>
    <isoform>
        <id>O94759-3</id>
        <name>3</name>
        <name>TRPM2-S</name>
        <sequence type="described" ref="VSP_013018"/>
    </isoform>
</comment>
<comment type="tissue specificity">
    <text evidence="7 8">Highly expressed in brain and peripheral blood cells, such as neutrophils. Also detected in bone marrow, spleen, heart, liver and lung. Isoform 2 is found in neutrophil granulocytes.</text>
</comment>
<comment type="domain">
    <text evidence="12 14 27 28">Contains two binding sites for ADP-ribose, one in the N-terminal part of the channel and the other in the C-terminal nudix hydrolase domain (PubMed:15561722, PubMed:16601673, PubMed:30467180, PubMed:31513012). Both sites seem to have a role in channel opening, but the interaction of ADP-ribose with the N-terminal site is absolutely required for channel activation (PubMed:31513012).</text>
</comment>
<comment type="PTM">
    <text evidence="3">Phosphorylation of TRPM2 at Thr-740 by protein kinase C (PKC) counteracts the effect of cytosolic Ca(2+) and elevates the temperature threshold.</text>
</comment>
<comment type="similarity">
    <text evidence="39">Belongs to the transient receptor (TC 1.A.4) family. LTrpC subfamily. TRPM2 sub-subfamily.</text>
</comment>
<comment type="caution">
    <text evidence="7 24">The isolated nudix hydrolase domain was shown to have low catalytic activity with ADP-ribose upon heterologous expression (PubMed:11385575). However, a more recent publication demonstrates that the nudix hydrolase domain lacks enzyme activity and suggests that spontaneous degradation of the substrate underlies the previously reported low activity (PubMed:27383051).</text>
</comment>
<comment type="sequence caution" evidence="39">
    <conflict type="frameshift">
        <sequence resource="EMBL-CDS" id="BAB64300"/>
    </conflict>
</comment>
<reference key="1">
    <citation type="journal article" date="1998" name="Genomics">
        <title>Molecular cloning of a novel putative Ca2+ channel protein (TRPC7) highly expressed in brain.</title>
        <authorList>
            <person name="Nagamine K."/>
            <person name="Kudoh J."/>
            <person name="Minoshima S."/>
            <person name="Kawasaki K."/>
            <person name="Asakawa S."/>
            <person name="Ito F."/>
            <person name="Shimizu N."/>
        </authorList>
    </citation>
    <scope>NUCLEOTIDE SEQUENCE [MRNA] (ISOFORM 1)</scope>
    <scope>VARIANT ARG-1189</scope>
    <source>
        <tissue>Brain</tissue>
    </source>
</reference>
<reference key="2">
    <citation type="journal article" date="2002" name="J. Biol. Chem.">
        <title>Activation of the cation channel long transient receptor potential channel 2 (LTRPC2) by hydrogen peroxide. A splice variant reveals a mode of activation independent of ADP-ribose.</title>
        <authorList>
            <person name="Wehage E."/>
            <person name="Eisfeld J."/>
            <person name="Heiner I."/>
            <person name="Juengling E."/>
            <person name="Zitt C."/>
            <person name="Lueckhoff A."/>
        </authorList>
    </citation>
    <scope>NUCLEOTIDE SEQUENCE [MRNA] (ISOFORM 2)</scope>
    <scope>VARIANT ARG-1189</scope>
    <scope>FUNCTION (ISOFORMS 1 AND 2)</scope>
    <scope>SUBCELLULAR LOCATION</scope>
    <scope>REGULATION BY OXIDATIVE STRESS</scope>
    <source>
        <tissue>Promyelocytic leukemia</tissue>
    </source>
</reference>
<reference key="3">
    <citation type="journal article" date="2003" name="J. Biol. Chem.">
        <title>A novel TRPM2 isoform inhibits calcium influx and susceptibility to cell death.</title>
        <authorList>
            <person name="Zhang W."/>
            <person name="Chu X."/>
            <person name="Tong Q."/>
            <person name="Cheung J.Y."/>
            <person name="Conrad K."/>
            <person name="Masker K."/>
            <person name="Miller B.A."/>
        </authorList>
    </citation>
    <scope>NUCLEOTIDE SEQUENCE [MRNA] (ISOFORM 3)</scope>
    <scope>VARIANT ARG-1189</scope>
    <scope>FUNCTION (ISOFORMS 1 AND 3)</scope>
    <scope>INTERACTION BETWEEN ISOFORMS 1 AND 3</scope>
    <scope>SUBCELLULAR LOCATION</scope>
    <source>
        <tissue>Bone marrow</tissue>
    </source>
</reference>
<reference key="4">
    <citation type="journal article" date="2005" name="Biochem. Biophys. Res. Commun.">
        <title>Characterization of human and mouse TRPM2 genes: identification of a novel N-terminal truncated protein specifically expressed in human striatum.</title>
        <authorList>
            <person name="Uemura T."/>
            <person name="Kudoh J."/>
            <person name="Noda S."/>
            <person name="Kanba S."/>
            <person name="Shimizu N."/>
        </authorList>
    </citation>
    <scope>NUCLEOTIDE SEQUENCE [MRNA] (ISOFORM 1)</scope>
    <scope>VARIANT ARG-1189</scope>
    <source>
        <tissue>Brain</tissue>
    </source>
</reference>
<reference key="5">
    <citation type="submission" date="2005-12" db="EMBL/GenBank/DDBJ databases">
        <title>Cloning of the human TRPM2.</title>
        <authorList>
            <person name="Hayes P.D."/>
        </authorList>
    </citation>
    <scope>NUCLEOTIDE SEQUENCE [MRNA] (ISOFORM 1)</scope>
    <scope>VARIANT ARG-1189</scope>
</reference>
<reference key="6">
    <citation type="submission" date="2005-04" db="EMBL/GenBank/DDBJ databases">
        <authorList>
            <consortium name="NIEHS SNPs program"/>
        </authorList>
    </citation>
    <scope>NUCLEOTIDE SEQUENCE [GENOMIC DNA]</scope>
    <scope>VARIANTS LYS-52; ILE-166; MET-385; GLU-543; GLU-780; TRP-1199; GLY-1201; SER-1249; MET-1347; LYS-1359; MET-1368 AND SER-1438</scope>
</reference>
<reference key="7">
    <citation type="journal article" date="2000" name="Nature">
        <title>The DNA sequence of human chromosome 21.</title>
        <authorList>
            <person name="Hattori M."/>
            <person name="Fujiyama A."/>
            <person name="Taylor T.D."/>
            <person name="Watanabe H."/>
            <person name="Yada T."/>
            <person name="Park H.-S."/>
            <person name="Toyoda A."/>
            <person name="Ishii K."/>
            <person name="Totoki Y."/>
            <person name="Choi D.-K."/>
            <person name="Groner Y."/>
            <person name="Soeda E."/>
            <person name="Ohki M."/>
            <person name="Takagi T."/>
            <person name="Sakaki Y."/>
            <person name="Taudien S."/>
            <person name="Blechschmidt K."/>
            <person name="Polley A."/>
            <person name="Menzel U."/>
            <person name="Delabar J."/>
            <person name="Kumpf K."/>
            <person name="Lehmann R."/>
            <person name="Patterson D."/>
            <person name="Reichwald K."/>
            <person name="Rump A."/>
            <person name="Schillhabel M."/>
            <person name="Schudy A."/>
            <person name="Zimmermann W."/>
            <person name="Rosenthal A."/>
            <person name="Kudoh J."/>
            <person name="Shibuya K."/>
            <person name="Kawasaki K."/>
            <person name="Asakawa S."/>
            <person name="Shintani A."/>
            <person name="Sasaki T."/>
            <person name="Nagamine K."/>
            <person name="Mitsuyama S."/>
            <person name="Antonarakis S.E."/>
            <person name="Minoshima S."/>
            <person name="Shimizu N."/>
            <person name="Nordsiek G."/>
            <person name="Hornischer K."/>
            <person name="Brandt P."/>
            <person name="Scharfe M."/>
            <person name="Schoen O."/>
            <person name="Desario A."/>
            <person name="Reichelt J."/>
            <person name="Kauer G."/>
            <person name="Bloecker H."/>
            <person name="Ramser J."/>
            <person name="Beck A."/>
            <person name="Klages S."/>
            <person name="Hennig S."/>
            <person name="Riesselmann L."/>
            <person name="Dagand E."/>
            <person name="Wehrmeyer S."/>
            <person name="Borzym K."/>
            <person name="Gardiner K."/>
            <person name="Nizetic D."/>
            <person name="Francis F."/>
            <person name="Lehrach H."/>
            <person name="Reinhardt R."/>
            <person name="Yaspo M.-L."/>
        </authorList>
    </citation>
    <scope>NUCLEOTIDE SEQUENCE [LARGE SCALE GENOMIC DNA]</scope>
</reference>
<reference key="8">
    <citation type="submission" date="2005-09" db="EMBL/GenBank/DDBJ databases">
        <authorList>
            <person name="Mural R.J."/>
            <person name="Istrail S."/>
            <person name="Sutton G.G."/>
            <person name="Florea L."/>
            <person name="Halpern A.L."/>
            <person name="Mobarry C.M."/>
            <person name="Lippert R."/>
            <person name="Walenz B."/>
            <person name="Shatkay H."/>
            <person name="Dew I."/>
            <person name="Miller J.R."/>
            <person name="Flanigan M.J."/>
            <person name="Edwards N.J."/>
            <person name="Bolanos R."/>
            <person name="Fasulo D."/>
            <person name="Halldorsson B.V."/>
            <person name="Hannenhalli S."/>
            <person name="Turner R."/>
            <person name="Yooseph S."/>
            <person name="Lu F."/>
            <person name="Nusskern D.R."/>
            <person name="Shue B.C."/>
            <person name="Zheng X.H."/>
            <person name="Zhong F."/>
            <person name="Delcher A.L."/>
            <person name="Huson D.H."/>
            <person name="Kravitz S.A."/>
            <person name="Mouchard L."/>
            <person name="Reinert K."/>
            <person name="Remington K.A."/>
            <person name="Clark A.G."/>
            <person name="Waterman M.S."/>
            <person name="Eichler E.E."/>
            <person name="Adams M.D."/>
            <person name="Hunkapiller M.W."/>
            <person name="Myers E.W."/>
            <person name="Venter J.C."/>
        </authorList>
    </citation>
    <scope>NUCLEOTIDE SEQUENCE [LARGE SCALE GENOMIC DNA]</scope>
</reference>
<reference key="9">
    <citation type="submission" date="1998-09" db="EMBL/GenBank/DDBJ databases">
        <title>Molecular cloning of a novel estrogen responsive gene, estrogen responsive element associated gene 1 (EREG1), which contains MutT like domain.</title>
        <authorList>
            <person name="Hiroi H."/>
            <person name="Muramatsu M."/>
            <person name="Inoue S."/>
        </authorList>
    </citation>
    <scope>NUCLEOTIDE SEQUENCE [MRNA] OF 1190-1503</scope>
</reference>
<reference key="10">
    <citation type="journal article" date="2001" name="Nature">
        <title>ADP-ribose gating of the calcium-permeable LTRPC2 channel revealed by Nudix motif homology.</title>
        <authorList>
            <person name="Perraud A.-L."/>
            <person name="Fleig A."/>
            <person name="Dunn C.A."/>
            <person name="Bagley L.A."/>
            <person name="Launay P."/>
            <person name="Schmitz C."/>
            <person name="Stokes A.J."/>
            <person name="Zhu Q."/>
            <person name="Bessman M.J."/>
            <person name="Penner R."/>
            <person name="Kinet J.-P."/>
            <person name="Scharenberg A.M."/>
        </authorList>
    </citation>
    <scope>FUNCTION</scope>
    <scope>TRANSPORTER ACTIVITY</scope>
    <scope>REGULATION BY ADP-RIBOSE</scope>
    <scope>SUBCELLULAR LOCATION</scope>
    <scope>TISSUE SPECIFICITY</scope>
    <scope>DOMAIN</scope>
</reference>
<reference key="11">
    <citation type="journal article" date="2001" name="Science">
        <title>Immunocyte Ca2+ influx system mediated by LTRPC2.</title>
        <authorList>
            <person name="Sano Y."/>
            <person name="Inamura K."/>
            <person name="Miyake A."/>
            <person name="Mochizuki S."/>
            <person name="Yokoi H."/>
            <person name="Matsushime H."/>
            <person name="Furuichi K."/>
        </authorList>
    </citation>
    <scope>FUNCTION</scope>
    <scope>TRANSPORTER ACTIVITY</scope>
    <scope>SUBCELLULAR LOCATION</scope>
    <scope>REGULATION BY PYRIMIDINE NUCLEOTIDES</scope>
    <scope>ACTIVITY REGULATION</scope>
    <scope>TISSUE SPECIFICITY</scope>
</reference>
<reference key="12">
    <citation type="journal article" date="2002" name="Mol. Cell">
        <title>LTRPC2 Ca2+-permeable channel activated by changes in redox status confers susceptibility to cell death.</title>
        <authorList>
            <person name="Hara Y."/>
            <person name="Wakamori M."/>
            <person name="Ishii M."/>
            <person name="Maeno E."/>
            <person name="Nishida M."/>
            <person name="Yoshida T."/>
            <person name="Yamada H."/>
            <person name="Shimizu S."/>
            <person name="Mori E."/>
            <person name="Kudoh J."/>
            <person name="Shimizu N."/>
            <person name="Kurose H."/>
            <person name="Okada Y."/>
            <person name="Imoto K."/>
            <person name="Mori Y."/>
        </authorList>
    </citation>
    <scope>FUNCTION</scope>
    <scope>SUBCELLULAR LOCATION</scope>
    <scope>ACTIVITY REGULATION</scope>
    <scope>MUTAGENESIS OF MET-1397</scope>
</reference>
<reference key="13">
    <citation type="journal article" date="2005" name="J. Biol. Chem.">
        <title>Accumulation of free ADP-ribose from mitochondria mediates oxidative stress-induced gating of TRPM2 cation channels.</title>
        <authorList>
            <person name="Perraud A.L."/>
            <person name="Takanishi C.L."/>
            <person name="Shen B."/>
            <person name="Kang S."/>
            <person name="Smith M.K."/>
            <person name="Schmitz C."/>
            <person name="Knowles H.M."/>
            <person name="Ferraris D."/>
            <person name="Li W."/>
            <person name="Zhang J."/>
            <person name="Stoddard B.L."/>
            <person name="Scharenberg A.M."/>
        </authorList>
    </citation>
    <scope>FUNCTION</scope>
    <scope>SUBCELLULAR LOCATION</scope>
    <scope>DOMAIN</scope>
    <scope>MUTAGENESIS OF ARG-1404; 1405-ILE--GLN-1408; 1408-GLN-GLU-1409 AND GLN-1408</scope>
</reference>
<reference key="14">
    <citation type="journal article" date="2006" name="EMBO J.">
        <title>TRPM2 activation by cyclic ADP-ribose at body temperature is involved in insulin secretion.</title>
        <authorList>
            <person name="Togashi K."/>
            <person name="Hara Y."/>
            <person name="Tominaga T."/>
            <person name="Higashi T."/>
            <person name="Konishi Y."/>
            <person name="Mori Y."/>
            <person name="Tominaga M."/>
        </authorList>
    </citation>
    <scope>FUNCTION</scope>
    <scope>SUBCELLULAR LOCATION</scope>
    <scope>DOMAIN</scope>
</reference>
<reference key="15">
    <citation type="journal article" date="2009" name="J. Gen. Physiol.">
        <title>Four Ca2+ ions activate TRPM2 channels by binding in deep crevices near the pore but intracellularly of the gate.</title>
        <authorList>
            <person name="Csanady L."/>
            <person name="Toerocsik B."/>
        </authorList>
    </citation>
    <scope>FUNCTION</scope>
    <scope>SUBCELLULAR LOCATION</scope>
</reference>
<reference key="16">
    <citation type="journal article" date="2009" name="Sci. Signal.">
        <title>TRPM2 functions as a lysosomal Ca2+-release channel in beta cells.</title>
        <authorList>
            <person name="Lange I."/>
            <person name="Yamamoto S."/>
            <person name="Partida-Sanchez S."/>
            <person name="Mori Y."/>
            <person name="Fleig A."/>
            <person name="Penner R."/>
        </authorList>
    </citation>
    <scope>FUNCTION</scope>
</reference>
<reference key="17">
    <citation type="journal article" date="2010" name="J. Biol. Chem.">
        <title>Identification of direct and indirect effectors of the transient receptor potential melastatin 2 (TRPM2) cation channel.</title>
        <authorList>
            <person name="Toth B."/>
            <person name="Csanady L."/>
        </authorList>
    </citation>
    <scope>FUNCTION</scope>
    <scope>SUBCELLULAR LOCATION</scope>
</reference>
<reference key="18">
    <citation type="journal article" date="2010" name="J. Biol. Chem.">
        <title>State-dependent inhibition of TRPM2 channel by acidic pH.</title>
        <authorList>
            <person name="Yang W."/>
            <person name="Zou J."/>
            <person name="Xia R."/>
            <person name="Vaal M.L."/>
            <person name="Seymour V.A."/>
            <person name="Luo J."/>
            <person name="Beech D.J."/>
            <person name="Jiang L.H."/>
        </authorList>
    </citation>
    <scope>FUNCTION</scope>
    <scope>SUBCELLULAR LOCATION</scope>
    <scope>ACTIVITY REGULATION</scope>
    <scope>MUTAGENESIS OF LYS-952; HIS-958; ARG-961; ARG-962; ARG-968; HIS-973; HIS-995; ASP-1002; LYS-1005 AND LYS-1007</scope>
</reference>
<reference key="19">
    <citation type="journal article" date="2012" name="Proc. Natl. Acad. Sci. U.S.A.">
        <title>Redox signal-mediated sensitization of transient receptor potential melastatin 2 (TRPM2) to temperature affects macrophage functions.</title>
        <authorList>
            <person name="Kashio M."/>
            <person name="Sokabe T."/>
            <person name="Shintaku K."/>
            <person name="Uematsu T."/>
            <person name="Fukuta N."/>
            <person name="Kobayashi N."/>
            <person name="Mori Y."/>
            <person name="Tominaga M."/>
        </authorList>
    </citation>
    <scope>FUNCTION</scope>
    <scope>SUBCELLULAR LOCATION</scope>
    <scope>MUTAGENESIS OF MET-215</scope>
</reference>
<reference key="20">
    <citation type="journal article" date="2015" name="Biochem. J.">
        <title>TRPM2-mediated intracellular Zn2+ release triggers pancreatic beta-cell death.</title>
        <authorList>
            <person name="Manna P.T."/>
            <person name="Munsey T.S."/>
            <person name="Abuarab N."/>
            <person name="Li F."/>
            <person name="Asipu A."/>
            <person name="Howell G."/>
            <person name="Sedo A."/>
            <person name="Yang W."/>
            <person name="Naylor J."/>
            <person name="Beech D.J."/>
            <person name="Jiang L.H."/>
            <person name="Sivaprasadarao A."/>
        </authorList>
    </citation>
    <scope>FUNCTION</scope>
</reference>
<reference key="21">
    <citation type="journal article" date="2015" name="J. Gen. Physiol.">
        <title>Ruling out pyridine dinucleotides as true TRPM2 channel activators reveals novel direct agonist ADP-ribose-2'-phosphate.</title>
        <authorList>
            <person name="Toth B."/>
            <person name="Iordanov I."/>
            <person name="Csanady L."/>
        </authorList>
    </citation>
    <scope>FUNCTION</scope>
    <scope>SUBCELLULAR LOCATION</scope>
</reference>
<reference key="22">
    <citation type="journal article" date="2015" name="Sci. Rep.">
        <title>Functional characterisation of a TRPM2 orthologue from the sea anemone Nematostella vectensis in human cells.</title>
        <authorList>
            <person name="Kuehn F.J."/>
            <person name="Kuehn C."/>
            <person name="Lueckhoff A."/>
        </authorList>
    </citation>
    <scope>FUNCTION</scope>
    <scope>MUTAGENESIS OF ARG-1400 AND ARG-1407</scope>
</reference>
<reference key="23">
    <citation type="journal article" date="2016" name="Elife">
        <title>The proposed channel-enzyme transient receptor potential melastatin 2 does not possess ADP ribose hydrolase activity.</title>
        <authorList>
            <person name="Iordanov I."/>
            <person name="Mihalyi C."/>
            <person name="Toth B."/>
            <person name="Csanady L."/>
        </authorList>
    </citation>
    <scope>LACK OF CATALYTIC ACTIVITY</scope>
    <scope>FUNCTION</scope>
    <scope>SUBCELLULAR LOCATION</scope>
</reference>
<reference key="24">
    <citation type="journal article" date="2016" name="J. Cell Sci.">
        <title>Reciprocal regulation of actin cytoskeleton remodelling and cell migration by Ca2+ and Zn2+: role of TRPM2 channels.</title>
        <authorList>
            <person name="Li F."/>
            <person name="Abuarab N."/>
            <person name="Sivaprasadarao A."/>
        </authorList>
    </citation>
    <scope>FUNCTION</scope>
    <scope>SUBCELLULAR LOCATION</scope>
</reference>
<reference key="25">
    <citation type="journal article" date="2017" name="Sci. Rep.">
        <title>Modulation of activation and inactivation by Ca2+ and 2-APB in the pore of an archetypal TRPM channel from Nematostella vectensis.</title>
        <authorList>
            <person name="Kuehn F.J.P."/>
            <person name="Mathis W."/>
            <person name="Cornelia K."/>
            <person name="Hoffmann D.C."/>
            <person name="Lueckhoff A."/>
        </authorList>
    </citation>
    <scope>FUNCTION</scope>
    <scope>ACTIVITY REGULATION</scope>
</reference>
<reference key="26">
    <citation type="journal article" date="2018" name="Elife">
        <title>Structure of a TRPM2 channel in complex with Ca2+ explains unique gating regulation.</title>
        <authorList>
            <person name="Zhang Z."/>
            <person name="Toth B."/>
            <person name="Szollosi A."/>
            <person name="Chen J."/>
            <person name="Csanady L."/>
        </authorList>
    </citation>
    <scope>FUNCTION</scope>
    <scope>ACTIVITY REGULATION</scope>
    <scope>MUTAGENESIS OF 984-GLY-TYR-985</scope>
</reference>
<reference key="27">
    <citation type="journal article" date="2021" name="Int. J. Mol. Sci.">
        <title>Species-Specific Regulation of TRPM2 by PI(4,5)P2 via the Membrane Interfacial Cavity.</title>
        <authorList>
            <person name="Barth D."/>
            <person name="Lueckhoff A."/>
            <person name="Kuehn F.J.P."/>
        </authorList>
    </citation>
    <scope>ACTIVITY REGULATION</scope>
    <scope>MUTAGENESIS OF LYS-918 AND ARG-1077</scope>
</reference>
<reference key="28">
    <citation type="journal article" date="2018" name="Science">
        <title>Structures and gating mechanism of human TRPM2.</title>
        <authorList>
            <person name="Wang L."/>
            <person name="Fu T.M."/>
            <person name="Zhou Y."/>
            <person name="Xia S."/>
            <person name="Greka A."/>
            <person name="Wu H."/>
        </authorList>
    </citation>
    <scope>STRUCTURE BY ELECTRON MICROSCOPY (3.60 ANGSTROMS) OF APOPROTEIN AND IN COMPLEX WITH ADP-RIBOSE</scope>
    <scope>FUNCTION</scope>
    <scope>SUBCELLULAR LOCATION</scope>
    <scope>SUBUNIT</scope>
    <scope>DOMAIN</scope>
    <scope>MUTAGENESIS OF ARG-302; ARG-358 AND 1228-ARG--TYR-1503</scope>
</reference>
<reference evidence="41 42 43 44" key="29">
    <citation type="journal article" date="2019" name="Elife">
        <title>Ligand recognition and gating mechanism through three ligand-binding sites of human TRPM2 channel.</title>
        <authorList>
            <person name="Huang Y."/>
            <person name="Roth B."/>
            <person name="Lu W."/>
            <person name="Du J."/>
        </authorList>
    </citation>
    <scope>STRUCTURE BY ELECTRON MICROSCOPY (3.30 ANGSTROMS) IN COMPLEX WITH ADP-RIBOSE AND CALCIUM</scope>
    <scope>FUNCTION</scope>
    <scope>MUTAGENESIS OF MET-215; TYR-295; ARG-302; ARG-358 AND ARG-1433</scope>
    <scope>SUBUNIT</scope>
</reference>
<reference evidence="45 46" key="30">
    <citation type="journal article" date="2021" name="Cell Rep.">
        <title>Structural and functional basis of the selectivity filter as a gate in human TRPM2 channel.</title>
        <authorList>
            <person name="Yu X."/>
            <person name="Xie Y."/>
            <person name="Zhang X."/>
            <person name="Ma C."/>
            <person name="Liu L."/>
            <person name="Zhen W."/>
            <person name="Xu L."/>
            <person name="Zhang J."/>
            <person name="Liang Y."/>
            <person name="Zhao L."/>
            <person name="Gao X."/>
            <person name="Yu P."/>
            <person name="Luo J."/>
            <person name="Jiang L.H."/>
            <person name="Nie Y."/>
            <person name="Yang F."/>
            <person name="Guo J."/>
            <person name="Yang W."/>
        </authorList>
    </citation>
    <scope>STRUCTURE BY ELECTRON MICROSCOPY (3.68 ANGSTROMS) OF 745-1098</scope>
    <scope>FUNCTION</scope>
    <scope>TRANSPORTER ACTIVITY</scope>
    <scope>MUTAGENESIS OF GLY-980; GLN-981; ILE-982; GLY-984 AND TYR-985</scope>
</reference>
<accession>O94759</accession>
<accession>D3DSL6</accession>
<accession>Q5KTC2</accession>
<accession>Q6J3P5</accession>
<accession>Q96KN6</accession>
<accession>Q96Q93</accession>
<protein>
    <recommendedName>
        <fullName>Transient receptor potential cation channel subfamily M member 2</fullName>
    </recommendedName>
    <alternativeName>
        <fullName evidence="38">Estrogen-responsive element-associated gene 1 protein</fullName>
    </alternativeName>
    <alternativeName>
        <fullName evidence="34">Long transient receptor potential channel 2</fullName>
        <shortName>LTrpC-2</shortName>
        <shortName evidence="34">LTrpC2</shortName>
    </alternativeName>
    <alternativeName>
        <fullName evidence="37">Transient receptor potential channel 7</fullName>
        <shortName evidence="37">TrpC7</shortName>
    </alternativeName>
    <alternativeName>
        <fullName evidence="36">Transient receptor potential melastatin 2</fullName>
    </alternativeName>
</protein>
<sequence length="1503" mass="171198">MEPSALRKAGSEQEEGFEGLPRRVTDLGMVSNLRRSNSSLFKSWRLQCPFGNNDKQESLSSWIPENIKKKECVYFVESSKLSDAGKVVCQCGYTHEQHLEEATKPHTFQGTQWDPKKHVQEMPTDAFGDIVFTGLSQKVKKYVRVSQDTPSSVIYHLMTQHWGLDVPNLLISVTGGAKNFNMKPRLKSIFRRGLVKVAQTTGAWIITGGSHTGVMKQVGEAVRDFSLSSSYKEGELITIGVATWGTVHRREGLIHPTGSFPAEYILDEDGQGNLTCLDSNHSHFILVDDGTHGQYGVEIPLRTRLEKFISEQTKERGGVAIKIPIVCVVLEGGPGTLHTIDNATTNGTPCVVVEGSGRVADVIAQVANLPVSDITISLIQQKLSVFFQEMFETFTESRIVEWTKKIQDIVRRRQLLTVFREGKDGQQDVDVAILQALLKASRSQDHFGHENWDHQLKLAVAWNRVDIARSEIFMDEWQWKPSDLHPTMTAALISNKPEFVKLFLENGVQLKEFVTWDTLLYLYENLDPSCLFHSKLQKVLVEDPERPACAPAAPRLQMHHVAQVLRELLGDFTQPLYPRPRHNDRLRLLLPVPHVKLNVQGVSLRSLYKRSSGHVTFTMDPIRDLLIWAIVQNRRELAGIIWAQSQDCIAAALACSKILKELSKEEEDTDSSEEMLALAEEYEHRAIGVFTECYRKDEERAQKLLTRVSEAWGKTTCLQLALEAKDMKFVSHGGIQAFLTKVWWGQLSVDNGLWRVTLCMLAFPLLLTGLISFREKRLQDVGTPAARARAFFTAPVVVFHLNILSYFAFLCLFAYVLMVDFQPVPSWCECAIYLWLFSLVCEEMRQLFYDPDECGLMKKAALYFSDFWNKLDVGAILLFVAGLTCRLIPATLYPGRVILSLDFILFCLRLMHIFTISKTLGPKIIIVKRMMKDVFFFLFLLAVWVVSFGVAKQAILIHNERRVDWLFRGAVYHSYLTIFGQIPGYIDGVNFNPEHCSPNGTDPYKPKCPESDATQQRPAFPEWLTVLLLCLYLLFTNILLLNLLIAMFNYTFQQVQEHTDQIWKFQRHDLIEEYHGRPAAPPPFILLSHLQLFIKRVVLKTPAKRHKQLKNKLEKNEEAALLSWEIYLKENYLQNRQFQQKQRPEQKIEDISNKVDAMVDLLDLDPLKRSGSMEQRLASLEEQVAQTAQALHWIVRTLRASGFSSEADVPTLASQKAAEEPDAEPGGRKKTEEPGDSYHVNARHLLYPNCPVTRFPVPNEKVPWETEFLIYDPPFYTAERKDAAAMDPMGDTLEPLSTIQYNVVDGLRDRRSFHGPYTVQAGLPLNPMGRTGLRGRGSLSCFGPNHTLYPMVTRWRRNEDGAICRKSIKKMLEVLVVKLPLSEHWALPGGSREPGEMLPRKLKRILRQEHWPSFENLLKCGMEVYKGYMDDPRNTDNAWIETVAVSVHFQDQNDVELNRLNSNLHACDSGASIRWQVVDRRIPLYANHKTLLQKAAAEFGAHY</sequence>